<reference key="1">
    <citation type="journal article" date="1981" name="Nature">
        <title>Sequence and organization of the human mitochondrial genome.</title>
        <authorList>
            <person name="Anderson S."/>
            <person name="Bankier A.T."/>
            <person name="Barrell B.G."/>
            <person name="de Bruijn M.H.L."/>
            <person name="Coulson A.R."/>
            <person name="Drouin J."/>
            <person name="Eperon I.C."/>
            <person name="Nierlich D.P."/>
            <person name="Roe B.A."/>
            <person name="Sanger F."/>
            <person name="Schreier P.H."/>
            <person name="Smith A.J.H."/>
            <person name="Staden R."/>
            <person name="Young I.G."/>
        </authorList>
    </citation>
    <scope>NUCLEOTIDE SEQUENCE [LARGE SCALE GENOMIC DNA]</scope>
</reference>
<reference key="2">
    <citation type="journal article" date="1995" name="Proc. Natl. Acad. Sci. U.S.A.">
        <title>Recent African origin of modern humans revealed by complete sequences of hominoid mitochondrial DNAs.</title>
        <authorList>
            <person name="Horai S."/>
            <person name="Hayasaka K."/>
            <person name="Kondo R."/>
            <person name="Tsugane K."/>
            <person name="Takahata N."/>
        </authorList>
    </citation>
    <scope>NUCLEOTIDE SEQUENCE [GENOMIC DNA]</scope>
    <scope>VARIANTS SER-235 AND ALA-415</scope>
    <source>
        <tissue>Placenta</tissue>
    </source>
</reference>
<reference key="3">
    <citation type="journal article" date="2003" name="Mol. Biol. Evol.">
        <title>Lineage-specific selection in human mtDNA: lack of polymorphisms in a segment of MTND5 gene in haplogroup J.</title>
        <authorList>
            <person name="Moilanen J.S."/>
            <person name="Finnila S."/>
            <person name="Majamaa K."/>
        </authorList>
    </citation>
    <scope>NUCLEOTIDE SEQUENCE [GENOMIC DNA]</scope>
</reference>
<reference key="4">
    <citation type="journal article" date="2000" name="Nature">
        <title>Mitochondrial genome variation and the origin of modern humans.</title>
        <authorList>
            <person name="Ingman M."/>
            <person name="Kaessmann H."/>
            <person name="Paeaebo S."/>
            <person name="Gyllensten U."/>
        </authorList>
    </citation>
    <scope>NUCLEOTIDE SEQUENCE [GENOMIC DNA]</scope>
</reference>
<reference key="5">
    <citation type="journal article" date="2003" name="Genome Res.">
        <title>Mitochondrial genome variation and evolutionary history of Australian and New Guinean aborigines.</title>
        <authorList>
            <person name="Ingman M."/>
            <person name="Gyllensten U."/>
        </authorList>
    </citation>
    <scope>NUCLEOTIDE SEQUENCE [GENOMIC DNA]</scope>
</reference>
<reference key="6">
    <citation type="journal article" date="2004" name="Int. J. Legal Med.">
        <title>Single nucleotide polymorphisms over the entire mtDNA genome that increase the power of forensic testing in Caucasians.</title>
        <authorList>
            <person name="Coble M.D."/>
            <person name="Just R.S."/>
            <person name="O'Callaghan J.E."/>
            <person name="Letmanyi I.H."/>
            <person name="Peterson C.T."/>
            <person name="Irwin J.A."/>
            <person name="Parsons T.J."/>
        </authorList>
    </citation>
    <scope>NUCLEOTIDE SEQUENCE [GENOMIC DNA]</scope>
</reference>
<reference key="7">
    <citation type="journal article" date="1980" name="J. Mol. Biol.">
        <title>Cloning in single-stranded bacteriophage as an aid to rapid DNA sequencing.</title>
        <authorList>
            <person name="Sanger F."/>
            <person name="Coulson A.R."/>
            <person name="Barrell B.G."/>
            <person name="Smith A.J.H."/>
            <person name="Roe B.A."/>
        </authorList>
    </citation>
    <scope>NUCLEOTIDE SEQUENCE [GENOMIC DNA] OF 1-187</scope>
</reference>
<reference key="8">
    <citation type="journal article" date="1999" name="Am. J. Hum. Genet.">
        <title>Heterogenous point mutations in the mitochondrial tRNA Ser(UCN) precursor coexisting with the A1555G mutation in deaf students from Mongolia.</title>
        <authorList>
            <person name="Pandya A."/>
            <person name="Xia X.J."/>
            <person name="Erdenetungalag R."/>
            <person name="Amendola M."/>
            <person name="Landa B."/>
            <person name="Radnaabazar J."/>
            <person name="Dangaasuren B."/>
            <person name="Van Tuyle G."/>
            <person name="Nance W.E."/>
        </authorList>
    </citation>
    <scope>INVOLVEMENT IN DFNM</scope>
</reference>
<reference key="9">
    <citation type="journal article" date="2015" name="Cell Rep.">
        <title>MITRAC7 acts as a COX1-specific chaperone and reveals a checkpoint during cytochrome c oxidase assembly.</title>
        <authorList>
            <person name="Dennerlein S."/>
            <person name="Oeljeklaus S."/>
            <person name="Jans D."/>
            <person name="Hellwig C."/>
            <person name="Bareth B."/>
            <person name="Jakobs S."/>
            <person name="Deckers M."/>
            <person name="Warscheid B."/>
            <person name="Rehling P."/>
        </authorList>
    </citation>
    <scope>INTERACTION WITH COA3 AND SMIM20</scope>
</reference>
<reference key="10">
    <citation type="journal article" date="2015" name="Proteomics">
        <title>N-terminome analysis of the human mitochondrial proteome.</title>
        <authorList>
            <person name="Vaca Jacome A.S."/>
            <person name="Rabilloud T."/>
            <person name="Schaeffer-Reiss C."/>
            <person name="Rompais M."/>
            <person name="Ayoub D."/>
            <person name="Lane L."/>
            <person name="Bairoch A."/>
            <person name="Van Dorsselaer A."/>
            <person name="Carapito C."/>
        </authorList>
    </citation>
    <scope>IDENTIFICATION BY MASS SPECTROMETRY [LARGE SCALE ANALYSIS]</scope>
</reference>
<reference key="11">
    <citation type="journal article" date="2017" name="Biochim. Biophys. Acta">
        <title>The mitochondrial TMEM177 associates with COX20 during COX2 biogenesis.</title>
        <authorList>
            <person name="Lorenzi I."/>
            <person name="Oeljeklaus S."/>
            <person name="Aich A."/>
            <person name="Ronsoer C."/>
            <person name="Callegari S."/>
            <person name="Dudek J."/>
            <person name="Warscheid B."/>
            <person name="Dennerlein S."/>
            <person name="Rehling P."/>
        </authorList>
    </citation>
    <scope>INTERACTION WITH TMEM177</scope>
</reference>
<reference key="12">
    <citation type="journal article" date="2017" name="Cell">
        <title>Architecture of human mitochondrial respiratory megacomplex I2III2IV2.</title>
        <authorList>
            <person name="Guo R."/>
            <person name="Zong S."/>
            <person name="Wu M."/>
            <person name="Gu J."/>
            <person name="Yang M."/>
        </authorList>
    </citation>
    <scope>STRUCTURE BY ELECTRON MICROSCOPY (3.90 ANGSTROMS)</scope>
    <scope>SUBUNIT</scope>
</reference>
<reference key="13">
    <citation type="journal article" date="2018" name="Cell Res.">
        <title>Structure of the intact 14-subunit human cytochrome c oxidase.</title>
        <authorList>
            <person name="Zong S."/>
            <person name="Wu M."/>
            <person name="Gu J."/>
            <person name="Liu T."/>
            <person name="Guo R."/>
            <person name="Yang M."/>
        </authorList>
    </citation>
    <scope>STRUCTURE BY ELECTRON MICROSCOPY (3.60 ANGSTROMS)</scope>
</reference>
<reference key="14">
    <citation type="journal article" date="1991" name="Hum. Genet.">
        <title>Normal variants of human mitochondrial DNA and translation products: the building of a reference data base.</title>
        <authorList>
            <person name="Marzuki S."/>
            <person name="Noer A.S."/>
            <person name="Lertrit P."/>
            <person name="Thyagarajan D."/>
            <person name="Kapsa R."/>
            <person name="Utthanaphol P."/>
            <person name="Byrne E."/>
        </authorList>
    </citation>
    <scope>VARIANTS ALA-10; CYS-94; LEU-155; ALA-224 AND LEU-305</scope>
</reference>
<reference key="15">
    <citation type="journal article" date="1992" name="Am. J. Hum. Genet.">
        <title>A mitochondrial DNA variant, identified in Leber hereditary optic neuropathy patients, which extends the amino acid sequence of cytochrome c oxidase subunit I.</title>
        <authorList>
            <person name="Brown M.D."/>
            <person name="Yang C.-C."/>
            <person name="Trounce I."/>
            <person name="Torroni A."/>
            <person name="Lott M.T."/>
            <person name="Wallace D.C."/>
        </authorList>
    </citation>
    <scope>VARIANT LHON LYS-GLN-LYS-513 INS</scope>
</reference>
<reference key="16">
    <citation type="journal article" date="1997" name="Blood">
        <title>Heteroplasmic point mutations of mitochondrial DNA affecting subunit I of cytochrome c oxidase in two patients with acquired idiopathic sideroblastic anemia.</title>
        <authorList>
            <person name="Gattermann N."/>
            <person name="Retzlaff S."/>
            <person name="Wang Y.L."/>
            <person name="Hofhaus G."/>
            <person name="Heinisch J."/>
            <person name="Aul C."/>
            <person name="Schneider W."/>
        </authorList>
    </citation>
    <scope>VARIANTS THR-273 AND THR-280</scope>
    <scope>POSSIBLE INVOLVEMENT IN ACQUIRED IDIOPATHIC SIDEROBLASTIC ANEMIA</scope>
</reference>
<reference key="17">
    <citation type="journal article" date="1998" name="Eur. J. Biochem.">
        <title>MtDNA mutations associated with sideroblastic anaemia cause a defect of mitochondrial cytochrome c oxidase.</title>
        <authorList>
            <person name="Broker S."/>
            <person name="Meunier B."/>
            <person name="Rich P."/>
            <person name="Gattermann N."/>
            <person name="Hofhaus G."/>
        </authorList>
    </citation>
    <scope>VARIANTS THR-273 AND THR-280</scope>
    <scope>POSSIBLE INVOLVEMENT IN ACQUIRED IDIOPATHIC SIDEROBLASTIC ANEMIA</scope>
</reference>
<reference key="18">
    <citation type="journal article" date="2000" name="Neurology">
        <title>Recurrent myoglobinuria due to a nonsense mutation in the COX I gene of mitochondrial DNA.</title>
        <authorList>
            <person name="Karadimas C.L."/>
            <person name="Greenstein P."/>
            <person name="Sue C.M."/>
            <person name="Joseph J.T."/>
            <person name="Tanji K."/>
            <person name="Haller R.G."/>
            <person name="Taivassalo T."/>
            <person name="Davidson M.M."/>
            <person name="Shanske S."/>
            <person name="Bonilla E."/>
            <person name="DiMauro S."/>
        </authorList>
    </citation>
    <scope>INVOLVEMENT IN RM-MT</scope>
</reference>
<reference key="19">
    <citation type="journal article" date="2002" name="Hum. Mol. Genet.">
        <title>Metabolic consequences of a novel missense mutation of the mtDNA CO I gene.</title>
        <authorList>
            <person name="Varlamov D.A."/>
            <person name="Kudin A.P."/>
            <person name="Vielhaber S."/>
            <person name="Schroeder R."/>
            <person name="Sassen R."/>
            <person name="Becker A."/>
            <person name="Kunz D."/>
            <person name="Haug K."/>
            <person name="Rebstock J."/>
            <person name="Heils A."/>
            <person name="Elger C.E."/>
            <person name="Kunz W.S."/>
        </authorList>
    </citation>
    <scope>VARIANT MT-C4D ILE-196</scope>
</reference>
<reference key="20">
    <citation type="journal article" date="2006" name="Neurogenetics">
        <title>Introducing a novel human mtDNA mutation into the Paracoccus denitrificans COX I gene explains functional deficits in a patient.</title>
        <authorList>
            <person name="Lucioli S."/>
            <person name="Hoffmeier K."/>
            <person name="Carrozzo R."/>
            <person name="Tessa A."/>
            <person name="Ludwig B."/>
            <person name="Santorelli F.M."/>
        </authorList>
    </citation>
    <scope>VARIANT MT-C4D PHE-142</scope>
    <scope>CHARACTERIZATION OF VARIANT MT-C4D PHE-142</scope>
</reference>
<reference key="21">
    <citation type="journal article" date="2006" name="Proc. Natl. Acad. Sci. U.S.A.">
        <title>Mitochondrial DNA mutations are established in human colonic stem cells, and mutated clones expand by crypt fission.</title>
        <authorList>
            <person name="Greaves L.C."/>
            <person name="Preston S.L."/>
            <person name="Tadrous P.J."/>
            <person name="Taylor R.W."/>
            <person name="Barron M.J."/>
            <person name="Oukrif D."/>
            <person name="Leedham S.J."/>
            <person name="Deheragoda M."/>
            <person name="Sasieni P."/>
            <person name="Novelli M.R."/>
            <person name="Jankowski J.A.Z."/>
            <person name="Turnbull D.M."/>
            <person name="Wright N.A."/>
            <person name="McDonald S.A.C."/>
        </authorList>
    </citation>
    <scope>VARIANTS CRC ASP-125 AND PRO-458</scope>
</reference>
<reference key="22">
    <citation type="journal article" date="2009" name="Proc. Natl. Acad. Sci. U.S.A.">
        <title>A mitochondrial DNA mutation linked to colon cancer results in proton leaks in cytochrome c oxidase.</title>
        <authorList>
            <person name="Namslauer I."/>
            <person name="Brzezinski P."/>
        </authorList>
    </citation>
    <scope>CHARACTERIZATION OF VARIANTS CRC ASP-125 AND PRO-458</scope>
</reference>
<protein>
    <recommendedName>
        <fullName>Cytochrome c oxidase subunit 1</fullName>
        <ecNumber>7.1.1.9</ecNumber>
    </recommendedName>
    <alternativeName>
        <fullName>Cytochrome c oxidase polypeptide I</fullName>
    </alternativeName>
</protein>
<feature type="chain" id="PRO_0000183345" description="Cytochrome c oxidase subunit 1">
    <location>
        <begin position="1"/>
        <end position="513"/>
    </location>
</feature>
<feature type="topological domain" description="Mitochondrial matrix" evidence="14">
    <location>
        <begin position="1"/>
        <end position="11"/>
    </location>
</feature>
<feature type="transmembrane region" description="Helical; Name=I" evidence="1">
    <location>
        <begin position="12"/>
        <end position="40"/>
    </location>
</feature>
<feature type="topological domain" description="Mitochondrial intermembrane" evidence="14">
    <location>
        <begin position="41"/>
        <end position="50"/>
    </location>
</feature>
<feature type="transmembrane region" description="Helical; Name=II" evidence="1">
    <location>
        <begin position="51"/>
        <end position="86"/>
    </location>
</feature>
<feature type="topological domain" description="Mitochondrial matrix" evidence="14">
    <location>
        <begin position="87"/>
        <end position="94"/>
    </location>
</feature>
<feature type="transmembrane region" description="Helical; Name=III" evidence="1">
    <location>
        <begin position="95"/>
        <end position="117"/>
    </location>
</feature>
<feature type="topological domain" description="Mitochondrial intermembrane" evidence="14">
    <location>
        <begin position="118"/>
        <end position="140"/>
    </location>
</feature>
<feature type="transmembrane region" description="Helical; Name=IV" evidence="1">
    <location>
        <begin position="141"/>
        <end position="170"/>
    </location>
</feature>
<feature type="topological domain" description="Mitochondrial matrix" evidence="14">
    <location>
        <begin position="171"/>
        <end position="182"/>
    </location>
</feature>
<feature type="transmembrane region" description="Helical; Name=V" evidence="1">
    <location>
        <begin position="183"/>
        <end position="212"/>
    </location>
</feature>
<feature type="topological domain" description="Mitochondrial intermembrane" evidence="14">
    <location>
        <begin position="213"/>
        <end position="227"/>
    </location>
</feature>
<feature type="transmembrane region" description="Helical; Name=VI" evidence="1">
    <location>
        <begin position="228"/>
        <end position="261"/>
    </location>
</feature>
<feature type="topological domain" description="Mitochondrial matrix" evidence="14">
    <location>
        <begin position="262"/>
        <end position="269"/>
    </location>
</feature>
<feature type="transmembrane region" description="Helical; Name=VII" evidence="1">
    <location>
        <begin position="270"/>
        <end position="286"/>
    </location>
</feature>
<feature type="topological domain" description="Mitochondrial intermembrane" evidence="14">
    <location>
        <begin position="287"/>
        <end position="298"/>
    </location>
</feature>
<feature type="transmembrane region" description="Helical; Name=VIII" evidence="1">
    <location>
        <begin position="299"/>
        <end position="327"/>
    </location>
</feature>
<feature type="topological domain" description="Mitochondrial matrix" evidence="14">
    <location>
        <begin position="328"/>
        <end position="335"/>
    </location>
</feature>
<feature type="transmembrane region" description="Helical; Name=IX" evidence="1">
    <location>
        <begin position="336"/>
        <end position="357"/>
    </location>
</feature>
<feature type="topological domain" description="Mitochondrial intermembrane" evidence="14">
    <location>
        <begin position="358"/>
        <end position="370"/>
    </location>
</feature>
<feature type="transmembrane region" description="Helical; Name=X" evidence="1">
    <location>
        <begin position="371"/>
        <end position="400"/>
    </location>
</feature>
<feature type="topological domain" description="Mitochondrial matrix" evidence="14">
    <location>
        <begin position="401"/>
        <end position="406"/>
    </location>
</feature>
<feature type="transmembrane region" description="Helical; Name=XI" evidence="1">
    <location>
        <begin position="407"/>
        <end position="433"/>
    </location>
</feature>
<feature type="topological domain" description="Mitochondrial intermembrane" evidence="14">
    <location>
        <begin position="434"/>
        <end position="446"/>
    </location>
</feature>
<feature type="transmembrane region" description="Helical; Name=XII" evidence="1">
    <location>
        <begin position="447"/>
        <end position="478"/>
    </location>
</feature>
<feature type="topological domain" description="Mitochondrial matrix" evidence="14">
    <location>
        <begin position="479"/>
        <end position="513"/>
    </location>
</feature>
<feature type="binding site" evidence="2">
    <location>
        <position position="40"/>
    </location>
    <ligand>
        <name>Ca(2+)</name>
        <dbReference type="ChEBI" id="CHEBI:29108"/>
    </ligand>
</feature>
<feature type="binding site" evidence="2">
    <location>
        <position position="45"/>
    </location>
    <ligand>
        <name>Ca(2+)</name>
        <dbReference type="ChEBI" id="CHEBI:29108"/>
    </ligand>
</feature>
<feature type="binding site" description="axial binding residue" evidence="14">
    <location>
        <position position="61"/>
    </location>
    <ligand>
        <name>Fe(II)-heme a</name>
        <dbReference type="ChEBI" id="CHEBI:61715"/>
        <note>low-spin</note>
    </ligand>
    <ligandPart>
        <name>Fe</name>
        <dbReference type="ChEBI" id="CHEBI:18248"/>
    </ligandPart>
</feature>
<feature type="binding site" evidence="14">
    <location>
        <position position="240"/>
    </location>
    <ligand>
        <name>Cu cation</name>
        <dbReference type="ChEBI" id="CHEBI:23378"/>
        <label>B</label>
    </ligand>
</feature>
<feature type="binding site" evidence="1">
    <location>
        <position position="244"/>
    </location>
    <ligand>
        <name>O2</name>
        <dbReference type="ChEBI" id="CHEBI:15379"/>
    </ligand>
</feature>
<feature type="binding site" evidence="14">
    <location>
        <position position="290"/>
    </location>
    <ligand>
        <name>Cu cation</name>
        <dbReference type="ChEBI" id="CHEBI:23378"/>
        <label>B</label>
    </ligand>
</feature>
<feature type="binding site" evidence="14">
    <location>
        <position position="291"/>
    </location>
    <ligand>
        <name>Cu cation</name>
        <dbReference type="ChEBI" id="CHEBI:23378"/>
        <label>B</label>
    </ligand>
</feature>
<feature type="binding site" evidence="14">
    <location>
        <position position="368"/>
    </location>
    <ligand>
        <name>Mg(2+)</name>
        <dbReference type="ChEBI" id="CHEBI:18420"/>
        <note>ligand shared with MT-CO2</note>
    </ligand>
</feature>
<feature type="binding site" evidence="14">
    <location>
        <position position="369"/>
    </location>
    <ligand>
        <name>Mg(2+)</name>
        <dbReference type="ChEBI" id="CHEBI:18420"/>
        <note>ligand shared with MT-CO2</note>
    </ligand>
</feature>
<feature type="binding site" description="axial binding residue" evidence="14">
    <location>
        <position position="376"/>
    </location>
    <ligand>
        <name>heme a3</name>
        <dbReference type="ChEBI" id="CHEBI:83282"/>
        <note>high-spin</note>
    </ligand>
    <ligandPart>
        <name>Fe</name>
        <dbReference type="ChEBI" id="CHEBI:18248"/>
    </ligandPart>
</feature>
<feature type="binding site" description="axial binding residue" evidence="14">
    <location>
        <position position="378"/>
    </location>
    <ligand>
        <name>Fe(II)-heme a</name>
        <dbReference type="ChEBI" id="CHEBI:61715"/>
        <note>low-spin</note>
    </ligand>
    <ligandPart>
        <name>Fe</name>
        <dbReference type="ChEBI" id="CHEBI:18248"/>
    </ligandPart>
</feature>
<feature type="cross-link" description="1'-histidyl-3'-tyrosine (His-Tyr)" evidence="1">
    <location>
        <begin position="240"/>
        <end position="244"/>
    </location>
</feature>
<feature type="sequence variant" id="VAR_008566" evidence="9">
    <original>T</original>
    <variation>A</variation>
    <location>
        <position position="10"/>
    </location>
</feature>
<feature type="sequence variant" id="VAR_008567" evidence="9">
    <original>F</original>
    <variation>C</variation>
    <location>
        <position position="94"/>
    </location>
</feature>
<feature type="sequence variant" id="VAR_064154" description="In CRC; displays steady-state catalytic activity linked to proton pumping that is approximately 34% of wild-type; an intrinsic proton leak is find in the enzyme, which will lead to decreased overall energy-conversion efficiency of the respiratory chain, perturbing transport processes such as protein, ion and metabolite trafficking; dbSNP:rs281865417." evidence="8 10">
    <original>G</original>
    <variation>D</variation>
    <location>
        <position position="125"/>
    </location>
</feature>
<feature type="sequence variant" id="VAR_033055" description="In MT-C4D; significant decrease in enzyme activity; dbSNP:rs267606883." evidence="7">
    <original>S</original>
    <variation>F</variation>
    <location>
        <position position="142"/>
    </location>
</feature>
<feature type="sequence variant" id="VAR_008568" description="In dbSNP:rs370673798." evidence="9">
    <original>V</original>
    <variation>L</variation>
    <location>
        <position position="155"/>
    </location>
</feature>
<feature type="sequence variant" id="VAR_033056" description="In MT-C4D; dbSNP:rs28461189." evidence="5">
    <original>L</original>
    <variation>I</variation>
    <location>
        <position position="196"/>
    </location>
</feature>
<feature type="sequence variant" id="VAR_008569" evidence="9">
    <original>G</original>
    <variation>A</variation>
    <location>
        <position position="224"/>
    </location>
</feature>
<feature type="sequence variant" id="VAR_011342" description="In dbSNP:rs2853818." evidence="15">
    <original>F</original>
    <variation>S</variation>
    <location>
        <position position="235"/>
    </location>
</feature>
<feature type="sequence variant" id="VAR_008385" description="Found in two patients with acquired idiopathic sideroblastic anemia; dbSNP:rs199476127." evidence="16 17">
    <original>M</original>
    <variation>T</variation>
    <location>
        <position position="273"/>
    </location>
</feature>
<feature type="sequence variant" id="VAR_008386" description="Found in two patients with acquired idiopathic sideroblastic anemia; dbSNP:rs199476126." evidence="16 17">
    <original>I</original>
    <variation>T</variation>
    <location>
        <position position="280"/>
    </location>
</feature>
<feature type="sequence variant" id="VAR_008570" description="In dbSNP:rs368552121." evidence="9">
    <original>F</original>
    <variation>L</variation>
    <location>
        <position position="305"/>
    </location>
</feature>
<feature type="sequence variant" id="VAR_011343" description="In dbSNP:rs372136420." evidence="15">
    <original>T</original>
    <variation>A</variation>
    <location>
        <position position="415"/>
    </location>
</feature>
<feature type="sequence variant" id="VAR_064155" description="In CRC; the mutant is probably not expressed, indicating that the amino acid substitution results in a severely altered overall structure of the enzyme; dbSNP:rs267606884." evidence="8 10">
    <original>S</original>
    <variation>P</variation>
    <location>
        <position position="458"/>
    </location>
</feature>
<feature type="sequence variant" id="VAR_008387" description="In LHON; secondary mutation; does not seem to directly cause the disease." evidence="6">
    <original>S</original>
    <variation>SKQK</variation>
    <location>
        <position position="513"/>
    </location>
</feature>
<dbReference type="EC" id="7.1.1.9"/>
<dbReference type="EMBL" id="V00662">
    <property type="protein sequence ID" value="CAA24028.1"/>
    <property type="molecule type" value="Genomic_DNA"/>
</dbReference>
<dbReference type="EMBL" id="J01415">
    <property type="protein sequence ID" value="AAB58945.1"/>
    <property type="molecule type" value="Genomic_DNA"/>
</dbReference>
<dbReference type="EMBL" id="D38112">
    <property type="protein sequence ID" value="BAA07292.1"/>
    <property type="molecule type" value="Genomic_DNA"/>
</dbReference>
<dbReference type="EMBL" id="AY339402">
    <property type="protein sequence ID" value="AAP89038.1"/>
    <property type="molecule type" value="Genomic_DNA"/>
</dbReference>
<dbReference type="EMBL" id="AY339403">
    <property type="protein sequence ID" value="AAP89051.1"/>
    <property type="molecule type" value="Genomic_DNA"/>
</dbReference>
<dbReference type="EMBL" id="AY339404">
    <property type="protein sequence ID" value="AAP89064.1"/>
    <property type="molecule type" value="Genomic_DNA"/>
</dbReference>
<dbReference type="EMBL" id="AY339405">
    <property type="protein sequence ID" value="AAP89077.1"/>
    <property type="molecule type" value="Genomic_DNA"/>
</dbReference>
<dbReference type="EMBL" id="AY339406">
    <property type="protein sequence ID" value="AAP89090.1"/>
    <property type="molecule type" value="Genomic_DNA"/>
</dbReference>
<dbReference type="EMBL" id="AY339407">
    <property type="protein sequence ID" value="AAP89103.1"/>
    <property type="molecule type" value="Genomic_DNA"/>
</dbReference>
<dbReference type="EMBL" id="AY339408">
    <property type="protein sequence ID" value="AAP89116.1"/>
    <property type="molecule type" value="Genomic_DNA"/>
</dbReference>
<dbReference type="EMBL" id="AY339409">
    <property type="protein sequence ID" value="AAP89129.1"/>
    <property type="molecule type" value="Genomic_DNA"/>
</dbReference>
<dbReference type="EMBL" id="AY339410">
    <property type="protein sequence ID" value="AAP89142.1"/>
    <property type="molecule type" value="Genomic_DNA"/>
</dbReference>
<dbReference type="EMBL" id="AY339411">
    <property type="protein sequence ID" value="AAP89155.1"/>
    <property type="molecule type" value="Genomic_DNA"/>
</dbReference>
<dbReference type="EMBL" id="AY339412">
    <property type="protein sequence ID" value="AAP89168.1"/>
    <property type="molecule type" value="Genomic_DNA"/>
</dbReference>
<dbReference type="EMBL" id="AY339421">
    <property type="protein sequence ID" value="AAP89285.1"/>
    <property type="molecule type" value="Genomic_DNA"/>
</dbReference>
<dbReference type="EMBL" id="AY339422">
    <property type="protein sequence ID" value="AAP89298.1"/>
    <property type="molecule type" value="Genomic_DNA"/>
</dbReference>
<dbReference type="EMBL" id="AY339423">
    <property type="protein sequence ID" value="AAP89311.1"/>
    <property type="molecule type" value="Genomic_DNA"/>
</dbReference>
<dbReference type="EMBL" id="AY339424">
    <property type="protein sequence ID" value="AAP89324.1"/>
    <property type="molecule type" value="Genomic_DNA"/>
</dbReference>
<dbReference type="EMBL" id="AY339425">
    <property type="protein sequence ID" value="AAP89337.1"/>
    <property type="molecule type" value="Genomic_DNA"/>
</dbReference>
<dbReference type="EMBL" id="AY339426">
    <property type="protein sequence ID" value="AAP89350.1"/>
    <property type="molecule type" value="Genomic_DNA"/>
</dbReference>
<dbReference type="EMBL" id="AY339427">
    <property type="protein sequence ID" value="AAP89363.1"/>
    <property type="molecule type" value="Genomic_DNA"/>
</dbReference>
<dbReference type="EMBL" id="AY339428">
    <property type="protein sequence ID" value="AAP89376.1"/>
    <property type="molecule type" value="Genomic_DNA"/>
</dbReference>
<dbReference type="EMBL" id="AY339429">
    <property type="protein sequence ID" value="AAP89389.1"/>
    <property type="molecule type" value="Genomic_DNA"/>
</dbReference>
<dbReference type="EMBL" id="AY339430">
    <property type="protein sequence ID" value="AAP89402.1"/>
    <property type="molecule type" value="Genomic_DNA"/>
</dbReference>
<dbReference type="EMBL" id="AY339431">
    <property type="protein sequence ID" value="AAP89415.1"/>
    <property type="molecule type" value="Genomic_DNA"/>
</dbReference>
<dbReference type="EMBL" id="AY339432">
    <property type="protein sequence ID" value="AAP89428.1"/>
    <property type="molecule type" value="Genomic_DNA"/>
</dbReference>
<dbReference type="EMBL" id="AY339433">
    <property type="protein sequence ID" value="AAP89441.1"/>
    <property type="molecule type" value="Genomic_DNA"/>
</dbReference>
<dbReference type="EMBL" id="AY339434">
    <property type="protein sequence ID" value="AAP89454.1"/>
    <property type="molecule type" value="Genomic_DNA"/>
</dbReference>
<dbReference type="EMBL" id="AY339435">
    <property type="protein sequence ID" value="AAP89467.1"/>
    <property type="molecule type" value="Genomic_DNA"/>
</dbReference>
<dbReference type="EMBL" id="AY339436">
    <property type="protein sequence ID" value="AAP89480.1"/>
    <property type="molecule type" value="Genomic_DNA"/>
</dbReference>
<dbReference type="EMBL" id="AY339437">
    <property type="protein sequence ID" value="AAP89493.1"/>
    <property type="molecule type" value="Genomic_DNA"/>
</dbReference>
<dbReference type="EMBL" id="AY339438">
    <property type="protein sequence ID" value="AAP89506.1"/>
    <property type="molecule type" value="Genomic_DNA"/>
</dbReference>
<dbReference type="EMBL" id="AY339439">
    <property type="protein sequence ID" value="AAP89519.1"/>
    <property type="molecule type" value="Genomic_DNA"/>
</dbReference>
<dbReference type="EMBL" id="AY339440">
    <property type="protein sequence ID" value="AAP89532.1"/>
    <property type="molecule type" value="Genomic_DNA"/>
</dbReference>
<dbReference type="EMBL" id="AY339441">
    <property type="protein sequence ID" value="AAP89545.1"/>
    <property type="molecule type" value="Genomic_DNA"/>
</dbReference>
<dbReference type="EMBL" id="AY339442">
    <property type="protein sequence ID" value="AAP89558.1"/>
    <property type="molecule type" value="Genomic_DNA"/>
</dbReference>
<dbReference type="EMBL" id="AY339443">
    <property type="protein sequence ID" value="AAP89571.1"/>
    <property type="molecule type" value="Genomic_DNA"/>
</dbReference>
<dbReference type="EMBL" id="AY339444">
    <property type="protein sequence ID" value="AAP89584.1"/>
    <property type="molecule type" value="Genomic_DNA"/>
</dbReference>
<dbReference type="EMBL" id="AY339445">
    <property type="protein sequence ID" value="AAP89597.1"/>
    <property type="molecule type" value="Genomic_DNA"/>
</dbReference>
<dbReference type="EMBL" id="AY339451">
    <property type="protein sequence ID" value="AAP89675.1"/>
    <property type="molecule type" value="Genomic_DNA"/>
</dbReference>
<dbReference type="EMBL" id="AY339452">
    <property type="protein sequence ID" value="AAP89688.1"/>
    <property type="molecule type" value="Genomic_DNA"/>
</dbReference>
<dbReference type="EMBL" id="AY339453">
    <property type="protein sequence ID" value="AAP89701.1"/>
    <property type="molecule type" value="Genomic_DNA"/>
</dbReference>
<dbReference type="EMBL" id="AY339454">
    <property type="protein sequence ID" value="AAP89714.1"/>
    <property type="molecule type" value="Genomic_DNA"/>
</dbReference>
<dbReference type="EMBL" id="AY339455">
    <property type="protein sequence ID" value="AAP89727.1"/>
    <property type="molecule type" value="Genomic_DNA"/>
</dbReference>
<dbReference type="EMBL" id="AY339456">
    <property type="protein sequence ID" value="AAP89740.1"/>
    <property type="molecule type" value="Genomic_DNA"/>
</dbReference>
<dbReference type="EMBL" id="AY339457">
    <property type="protein sequence ID" value="AAP89753.1"/>
    <property type="molecule type" value="Genomic_DNA"/>
</dbReference>
<dbReference type="EMBL" id="AY339458">
    <property type="protein sequence ID" value="AAP89766.1"/>
    <property type="molecule type" value="Genomic_DNA"/>
</dbReference>
<dbReference type="EMBL" id="AY339459">
    <property type="protein sequence ID" value="AAP89779.1"/>
    <property type="molecule type" value="Genomic_DNA"/>
</dbReference>
<dbReference type="EMBL" id="AY339460">
    <property type="protein sequence ID" value="AAP89792.1"/>
    <property type="molecule type" value="Genomic_DNA"/>
</dbReference>
<dbReference type="EMBL" id="AY339461">
    <property type="protein sequence ID" value="AAP89805.1"/>
    <property type="molecule type" value="Genomic_DNA"/>
</dbReference>
<dbReference type="EMBL" id="AY339462">
    <property type="protein sequence ID" value="AAP89818.1"/>
    <property type="molecule type" value="Genomic_DNA"/>
</dbReference>
<dbReference type="EMBL" id="AY339463">
    <property type="protein sequence ID" value="AAP89831.1"/>
    <property type="molecule type" value="Genomic_DNA"/>
</dbReference>
<dbReference type="EMBL" id="AY339464">
    <property type="protein sequence ID" value="AAP89844.1"/>
    <property type="molecule type" value="Genomic_DNA"/>
</dbReference>
<dbReference type="EMBL" id="AY339465">
    <property type="protein sequence ID" value="AAP89857.1"/>
    <property type="molecule type" value="Genomic_DNA"/>
</dbReference>
<dbReference type="EMBL" id="AY339466">
    <property type="protein sequence ID" value="AAP89870.1"/>
    <property type="molecule type" value="Genomic_DNA"/>
</dbReference>
<dbReference type="EMBL" id="AY339467">
    <property type="protein sequence ID" value="AAP89883.1"/>
    <property type="molecule type" value="Genomic_DNA"/>
</dbReference>
<dbReference type="EMBL" id="AY339468">
    <property type="protein sequence ID" value="AAP89896.1"/>
    <property type="molecule type" value="Genomic_DNA"/>
</dbReference>
<dbReference type="EMBL" id="AY339469">
    <property type="protein sequence ID" value="AAP89909.1"/>
    <property type="molecule type" value="Genomic_DNA"/>
</dbReference>
<dbReference type="EMBL" id="AY339470">
    <property type="protein sequence ID" value="AAP89922.1"/>
    <property type="molecule type" value="Genomic_DNA"/>
</dbReference>
<dbReference type="EMBL" id="AY339471">
    <property type="protein sequence ID" value="AAP89935.1"/>
    <property type="molecule type" value="Genomic_DNA"/>
</dbReference>
<dbReference type="EMBL" id="AY339472">
    <property type="protein sequence ID" value="AAP89948.1"/>
    <property type="molecule type" value="Genomic_DNA"/>
</dbReference>
<dbReference type="EMBL" id="AY339473">
    <property type="protein sequence ID" value="AAP89961.1"/>
    <property type="molecule type" value="Genomic_DNA"/>
</dbReference>
<dbReference type="EMBL" id="AY339474">
    <property type="protein sequence ID" value="AAP89974.1"/>
    <property type="molecule type" value="Genomic_DNA"/>
</dbReference>
<dbReference type="EMBL" id="AY339475">
    <property type="protein sequence ID" value="AAP89987.1"/>
    <property type="molecule type" value="Genomic_DNA"/>
</dbReference>
<dbReference type="EMBL" id="AY339476">
    <property type="protein sequence ID" value="AAP90000.1"/>
    <property type="molecule type" value="Genomic_DNA"/>
</dbReference>
<dbReference type="EMBL" id="AY339477">
    <property type="protein sequence ID" value="AAP90013.1"/>
    <property type="molecule type" value="Genomic_DNA"/>
</dbReference>
<dbReference type="EMBL" id="AY339478">
    <property type="protein sequence ID" value="AAP90026.1"/>
    <property type="molecule type" value="Genomic_DNA"/>
</dbReference>
<dbReference type="EMBL" id="AY339479">
    <property type="protein sequence ID" value="AAP90039.1"/>
    <property type="molecule type" value="Genomic_DNA"/>
</dbReference>
<dbReference type="EMBL" id="AY339480">
    <property type="protein sequence ID" value="AAP90052.1"/>
    <property type="molecule type" value="Genomic_DNA"/>
</dbReference>
<dbReference type="EMBL" id="AY339481">
    <property type="protein sequence ID" value="AAP90065.1"/>
    <property type="molecule type" value="Genomic_DNA"/>
</dbReference>
<dbReference type="EMBL" id="AY339482">
    <property type="protein sequence ID" value="AAP90078.1"/>
    <property type="molecule type" value="Genomic_DNA"/>
</dbReference>
<dbReference type="EMBL" id="AY339483">
    <property type="protein sequence ID" value="AAP90091.1"/>
    <property type="molecule type" value="Genomic_DNA"/>
</dbReference>
<dbReference type="EMBL" id="AY339484">
    <property type="protein sequence ID" value="AAP90104.1"/>
    <property type="molecule type" value="Genomic_DNA"/>
</dbReference>
<dbReference type="EMBL" id="AY339485">
    <property type="protein sequence ID" value="AAP90117.1"/>
    <property type="molecule type" value="Genomic_DNA"/>
</dbReference>
<dbReference type="EMBL" id="AY339486">
    <property type="protein sequence ID" value="AAP90130.1"/>
    <property type="molecule type" value="Genomic_DNA"/>
</dbReference>
<dbReference type="EMBL" id="AY339487">
    <property type="protein sequence ID" value="AAP90143.1"/>
    <property type="molecule type" value="Genomic_DNA"/>
</dbReference>
<dbReference type="EMBL" id="AY339488">
    <property type="protein sequence ID" value="AAP90156.1"/>
    <property type="molecule type" value="Genomic_DNA"/>
</dbReference>
<dbReference type="EMBL" id="AY339489">
    <property type="protein sequence ID" value="AAP90169.1"/>
    <property type="molecule type" value="Genomic_DNA"/>
</dbReference>
<dbReference type="EMBL" id="AY339490">
    <property type="protein sequence ID" value="AAP90182.1"/>
    <property type="molecule type" value="Genomic_DNA"/>
</dbReference>
<dbReference type="EMBL" id="AY339491">
    <property type="protein sequence ID" value="AAP90195.1"/>
    <property type="molecule type" value="Genomic_DNA"/>
</dbReference>
<dbReference type="EMBL" id="AY339492">
    <property type="protein sequence ID" value="AAP90208.1"/>
    <property type="molecule type" value="Genomic_DNA"/>
</dbReference>
<dbReference type="EMBL" id="AY339493">
    <property type="protein sequence ID" value="AAP90221.1"/>
    <property type="molecule type" value="Genomic_DNA"/>
</dbReference>
<dbReference type="EMBL" id="AY339494">
    <property type="protein sequence ID" value="AAP90234.1"/>
    <property type="molecule type" value="Genomic_DNA"/>
</dbReference>
<dbReference type="EMBL" id="AY339495">
    <property type="protein sequence ID" value="AAP90247.1"/>
    <property type="molecule type" value="Genomic_DNA"/>
</dbReference>
<dbReference type="EMBL" id="AY339496">
    <property type="protein sequence ID" value="AAP90260.1"/>
    <property type="molecule type" value="Genomic_DNA"/>
</dbReference>
<dbReference type="EMBL" id="AY339497">
    <property type="protein sequence ID" value="AAP90273.1"/>
    <property type="molecule type" value="Genomic_DNA"/>
</dbReference>
<dbReference type="EMBL" id="AY339498">
    <property type="protein sequence ID" value="AAP90286.1"/>
    <property type="molecule type" value="Genomic_DNA"/>
</dbReference>
<dbReference type="EMBL" id="AY339499">
    <property type="protein sequence ID" value="AAP90299.1"/>
    <property type="molecule type" value="Genomic_DNA"/>
</dbReference>
<dbReference type="EMBL" id="AY339500">
    <property type="protein sequence ID" value="AAP90312.1"/>
    <property type="molecule type" value="Genomic_DNA"/>
</dbReference>
<dbReference type="EMBL" id="AY339501">
    <property type="protein sequence ID" value="AAP90325.1"/>
    <property type="molecule type" value="Genomic_DNA"/>
</dbReference>
<dbReference type="EMBL" id="AY339502">
    <property type="protein sequence ID" value="AAP90338.1"/>
    <property type="molecule type" value="Genomic_DNA"/>
</dbReference>
<dbReference type="EMBL" id="AY339503">
    <property type="protein sequence ID" value="AAP90351.1"/>
    <property type="molecule type" value="Genomic_DNA"/>
</dbReference>
<dbReference type="EMBL" id="AY339504">
    <property type="protein sequence ID" value="AAP90364.1"/>
    <property type="molecule type" value="Genomic_DNA"/>
</dbReference>
<dbReference type="EMBL" id="AY339505">
    <property type="protein sequence ID" value="AAP90377.1"/>
    <property type="molecule type" value="Genomic_DNA"/>
</dbReference>
<dbReference type="EMBL" id="AY339506">
    <property type="protein sequence ID" value="AAP90390.1"/>
    <property type="molecule type" value="Genomic_DNA"/>
</dbReference>
<dbReference type="EMBL" id="AY339507">
    <property type="protein sequence ID" value="AAP90403.1"/>
    <property type="molecule type" value="Genomic_DNA"/>
</dbReference>
<dbReference type="EMBL" id="AY339508">
    <property type="protein sequence ID" value="AAP90416.1"/>
    <property type="molecule type" value="Genomic_DNA"/>
</dbReference>
<dbReference type="EMBL" id="AY339509">
    <property type="protein sequence ID" value="AAP90429.1"/>
    <property type="molecule type" value="Genomic_DNA"/>
</dbReference>
<dbReference type="EMBL" id="AY339510">
    <property type="protein sequence ID" value="AAP90442.1"/>
    <property type="molecule type" value="Genomic_DNA"/>
</dbReference>
<dbReference type="EMBL" id="AY339511">
    <property type="protein sequence ID" value="AAP90455.1"/>
    <property type="molecule type" value="Genomic_DNA"/>
</dbReference>
<dbReference type="EMBL" id="AY339512">
    <property type="protein sequence ID" value="AAP90468.1"/>
    <property type="molecule type" value="Genomic_DNA"/>
</dbReference>
<dbReference type="EMBL" id="AY339513">
    <property type="protein sequence ID" value="AAP90481.1"/>
    <property type="molecule type" value="Genomic_DNA"/>
</dbReference>
<dbReference type="EMBL" id="AY339514">
    <property type="protein sequence ID" value="AAP90494.1"/>
    <property type="molecule type" value="Genomic_DNA"/>
</dbReference>
<dbReference type="EMBL" id="AY339515">
    <property type="protein sequence ID" value="AAP90507.1"/>
    <property type="molecule type" value="Genomic_DNA"/>
</dbReference>
<dbReference type="EMBL" id="AY339516">
    <property type="protein sequence ID" value="AAP90520.1"/>
    <property type="molecule type" value="Genomic_DNA"/>
</dbReference>
<dbReference type="EMBL" id="AY339517">
    <property type="protein sequence ID" value="AAP90533.1"/>
    <property type="molecule type" value="Genomic_DNA"/>
</dbReference>
<dbReference type="EMBL" id="AY339518">
    <property type="protein sequence ID" value="AAP90546.1"/>
    <property type="molecule type" value="Genomic_DNA"/>
</dbReference>
<dbReference type="EMBL" id="AY339519">
    <property type="protein sequence ID" value="AAP90559.1"/>
    <property type="molecule type" value="Genomic_DNA"/>
</dbReference>
<dbReference type="EMBL" id="AY339520">
    <property type="protein sequence ID" value="AAP90572.1"/>
    <property type="molecule type" value="Genomic_DNA"/>
</dbReference>
<dbReference type="EMBL" id="AY339521">
    <property type="protein sequence ID" value="AAP90585.1"/>
    <property type="molecule type" value="Genomic_DNA"/>
</dbReference>
<dbReference type="EMBL" id="AY339522">
    <property type="protein sequence ID" value="AAP90598.1"/>
    <property type="molecule type" value="Genomic_DNA"/>
</dbReference>
<dbReference type="EMBL" id="AY339523">
    <property type="protein sequence ID" value="AAP90611.1"/>
    <property type="molecule type" value="Genomic_DNA"/>
</dbReference>
<dbReference type="EMBL" id="AY339524">
    <property type="protein sequence ID" value="AAP90624.1"/>
    <property type="molecule type" value="Genomic_DNA"/>
</dbReference>
<dbReference type="EMBL" id="AY339525">
    <property type="protein sequence ID" value="AAP90637.1"/>
    <property type="molecule type" value="Genomic_DNA"/>
</dbReference>
<dbReference type="EMBL" id="AY339526">
    <property type="protein sequence ID" value="AAP90650.1"/>
    <property type="molecule type" value="Genomic_DNA"/>
</dbReference>
<dbReference type="EMBL" id="AY339527">
    <property type="protein sequence ID" value="AAP90663.1"/>
    <property type="molecule type" value="Genomic_DNA"/>
</dbReference>
<dbReference type="EMBL" id="AY339528">
    <property type="protein sequence ID" value="AAP90676.1"/>
    <property type="molecule type" value="Genomic_DNA"/>
</dbReference>
<dbReference type="EMBL" id="AY339529">
    <property type="protein sequence ID" value="AAP90689.1"/>
    <property type="molecule type" value="Genomic_DNA"/>
</dbReference>
<dbReference type="EMBL" id="AY339530">
    <property type="protein sequence ID" value="AAP90702.1"/>
    <property type="molecule type" value="Genomic_DNA"/>
</dbReference>
<dbReference type="EMBL" id="AY339531">
    <property type="protein sequence ID" value="AAP90715.1"/>
    <property type="molecule type" value="Genomic_DNA"/>
</dbReference>
<dbReference type="EMBL" id="AY339532">
    <property type="protein sequence ID" value="AAP90728.1"/>
    <property type="molecule type" value="Genomic_DNA"/>
</dbReference>
<dbReference type="EMBL" id="AY339533">
    <property type="protein sequence ID" value="AAP90741.1"/>
    <property type="molecule type" value="Genomic_DNA"/>
</dbReference>
<dbReference type="EMBL" id="AY339534">
    <property type="protein sequence ID" value="AAP90754.1"/>
    <property type="molecule type" value="Genomic_DNA"/>
</dbReference>
<dbReference type="EMBL" id="AY339535">
    <property type="protein sequence ID" value="AAP90767.1"/>
    <property type="molecule type" value="Genomic_DNA"/>
</dbReference>
<dbReference type="EMBL" id="AY339536">
    <property type="protein sequence ID" value="AAP90780.1"/>
    <property type="molecule type" value="Genomic_DNA"/>
</dbReference>
<dbReference type="EMBL" id="AY339537">
    <property type="protein sequence ID" value="AAP90793.1"/>
    <property type="molecule type" value="Genomic_DNA"/>
</dbReference>
<dbReference type="EMBL" id="AY339538">
    <property type="protein sequence ID" value="AAP90806.1"/>
    <property type="molecule type" value="Genomic_DNA"/>
</dbReference>
<dbReference type="EMBL" id="AY339539">
    <property type="protein sequence ID" value="AAP90819.1"/>
    <property type="molecule type" value="Genomic_DNA"/>
</dbReference>
<dbReference type="EMBL" id="AY339540">
    <property type="protein sequence ID" value="AAP90832.1"/>
    <property type="molecule type" value="Genomic_DNA"/>
</dbReference>
<dbReference type="EMBL" id="AY339541">
    <property type="protein sequence ID" value="AAP90845.1"/>
    <property type="molecule type" value="Genomic_DNA"/>
</dbReference>
<dbReference type="EMBL" id="AY339542">
    <property type="protein sequence ID" value="AAP90858.1"/>
    <property type="molecule type" value="Genomic_DNA"/>
</dbReference>
<dbReference type="EMBL" id="AY339543">
    <property type="protein sequence ID" value="AAP90871.1"/>
    <property type="molecule type" value="Genomic_DNA"/>
</dbReference>
<dbReference type="EMBL" id="AY339544">
    <property type="protein sequence ID" value="AAP90884.1"/>
    <property type="molecule type" value="Genomic_DNA"/>
</dbReference>
<dbReference type="EMBL" id="AY339545">
    <property type="protein sequence ID" value="AAP90897.1"/>
    <property type="molecule type" value="Genomic_DNA"/>
</dbReference>
<dbReference type="EMBL" id="AY339546">
    <property type="protein sequence ID" value="AAP90910.1"/>
    <property type="molecule type" value="Genomic_DNA"/>
</dbReference>
<dbReference type="EMBL" id="AY339547">
    <property type="protein sequence ID" value="AAP90923.1"/>
    <property type="molecule type" value="Genomic_DNA"/>
</dbReference>
<dbReference type="EMBL" id="AY339548">
    <property type="protein sequence ID" value="AAP90936.1"/>
    <property type="molecule type" value="Genomic_DNA"/>
</dbReference>
<dbReference type="EMBL" id="AY339549">
    <property type="protein sequence ID" value="AAP90949.1"/>
    <property type="molecule type" value="Genomic_DNA"/>
</dbReference>
<dbReference type="EMBL" id="AY339550">
    <property type="protein sequence ID" value="AAP90962.1"/>
    <property type="molecule type" value="Genomic_DNA"/>
</dbReference>
<dbReference type="EMBL" id="AY339551">
    <property type="protein sequence ID" value="AAP90975.1"/>
    <property type="molecule type" value="Genomic_DNA"/>
</dbReference>
<dbReference type="EMBL" id="AY339552">
    <property type="protein sequence ID" value="AAP90988.1"/>
    <property type="molecule type" value="Genomic_DNA"/>
</dbReference>
<dbReference type="EMBL" id="AY339553">
    <property type="protein sequence ID" value="AAP91001.1"/>
    <property type="molecule type" value="Genomic_DNA"/>
</dbReference>
<dbReference type="EMBL" id="AY339554">
    <property type="protein sequence ID" value="AAP91014.1"/>
    <property type="molecule type" value="Genomic_DNA"/>
</dbReference>
<dbReference type="EMBL" id="AY339555">
    <property type="protein sequence ID" value="AAP91027.1"/>
    <property type="molecule type" value="Genomic_DNA"/>
</dbReference>
<dbReference type="EMBL" id="AY339556">
    <property type="protein sequence ID" value="AAP91040.1"/>
    <property type="molecule type" value="Genomic_DNA"/>
</dbReference>
<dbReference type="EMBL" id="AY339557">
    <property type="protein sequence ID" value="AAP91053.1"/>
    <property type="molecule type" value="Genomic_DNA"/>
</dbReference>
<dbReference type="EMBL" id="AY339558">
    <property type="protein sequence ID" value="AAP91066.1"/>
    <property type="molecule type" value="Genomic_DNA"/>
</dbReference>
<dbReference type="EMBL" id="AY339559">
    <property type="protein sequence ID" value="AAP91079.1"/>
    <property type="molecule type" value="Genomic_DNA"/>
</dbReference>
<dbReference type="EMBL" id="AY339560">
    <property type="protein sequence ID" value="AAP91092.1"/>
    <property type="molecule type" value="Genomic_DNA"/>
</dbReference>
<dbReference type="EMBL" id="AY339563">
    <property type="protein sequence ID" value="AAP91131.1"/>
    <property type="molecule type" value="Genomic_DNA"/>
</dbReference>
<dbReference type="EMBL" id="AY339564">
    <property type="protein sequence ID" value="AAP91144.1"/>
    <property type="molecule type" value="Genomic_DNA"/>
</dbReference>
<dbReference type="EMBL" id="AY339566">
    <property type="protein sequence ID" value="AAP91170.1"/>
    <property type="molecule type" value="Genomic_DNA"/>
</dbReference>
<dbReference type="EMBL" id="AY339567">
    <property type="protein sequence ID" value="AAP91183.1"/>
    <property type="molecule type" value="Genomic_DNA"/>
</dbReference>
<dbReference type="EMBL" id="AY339568">
    <property type="protein sequence ID" value="AAP91196.1"/>
    <property type="molecule type" value="Genomic_DNA"/>
</dbReference>
<dbReference type="EMBL" id="AY339569">
    <property type="protein sequence ID" value="AAP91209.1"/>
    <property type="molecule type" value="Genomic_DNA"/>
</dbReference>
<dbReference type="EMBL" id="AY339570">
    <property type="protein sequence ID" value="AAP91222.1"/>
    <property type="molecule type" value="Genomic_DNA"/>
</dbReference>
<dbReference type="EMBL" id="AY339571">
    <property type="protein sequence ID" value="AAP91235.1"/>
    <property type="molecule type" value="Genomic_DNA"/>
</dbReference>
<dbReference type="EMBL" id="AY339572">
    <property type="protein sequence ID" value="AAP91248.1"/>
    <property type="molecule type" value="Genomic_DNA"/>
</dbReference>
<dbReference type="EMBL" id="AY339573">
    <property type="protein sequence ID" value="AAP91261.1"/>
    <property type="molecule type" value="Genomic_DNA"/>
</dbReference>
<dbReference type="EMBL" id="AY339574">
    <property type="protein sequence ID" value="AAP91274.1"/>
    <property type="molecule type" value="Genomic_DNA"/>
</dbReference>
<dbReference type="EMBL" id="AY339575">
    <property type="protein sequence ID" value="AAP91287.1"/>
    <property type="molecule type" value="Genomic_DNA"/>
</dbReference>
<dbReference type="EMBL" id="AY339576">
    <property type="protein sequence ID" value="AAP91300.1"/>
    <property type="molecule type" value="Genomic_DNA"/>
</dbReference>
<dbReference type="EMBL" id="AY339577">
    <property type="protein sequence ID" value="AAP91313.1"/>
    <property type="molecule type" value="Genomic_DNA"/>
</dbReference>
<dbReference type="EMBL" id="AY339578">
    <property type="protein sequence ID" value="AAP91326.1"/>
    <property type="molecule type" value="Genomic_DNA"/>
</dbReference>
<dbReference type="EMBL" id="AY339579">
    <property type="protein sequence ID" value="AAP91339.1"/>
    <property type="molecule type" value="Genomic_DNA"/>
</dbReference>
<dbReference type="EMBL" id="AY339580">
    <property type="protein sequence ID" value="AAP91352.1"/>
    <property type="molecule type" value="Genomic_DNA"/>
</dbReference>
<dbReference type="EMBL" id="AY339581">
    <property type="protein sequence ID" value="AAP91365.1"/>
    <property type="molecule type" value="Genomic_DNA"/>
</dbReference>
<dbReference type="EMBL" id="AY339582">
    <property type="protein sequence ID" value="AAP91378.1"/>
    <property type="molecule type" value="Genomic_DNA"/>
</dbReference>
<dbReference type="EMBL" id="AY339583">
    <property type="protein sequence ID" value="AAP91391.1"/>
    <property type="molecule type" value="Genomic_DNA"/>
</dbReference>
<dbReference type="EMBL" id="AY339584">
    <property type="protein sequence ID" value="AAP91404.1"/>
    <property type="molecule type" value="Genomic_DNA"/>
</dbReference>
<dbReference type="EMBL" id="AY339585">
    <property type="protein sequence ID" value="AAP91417.1"/>
    <property type="molecule type" value="Genomic_DNA"/>
</dbReference>
<dbReference type="EMBL" id="AY339586">
    <property type="protein sequence ID" value="AAP91430.1"/>
    <property type="molecule type" value="Genomic_DNA"/>
</dbReference>
<dbReference type="EMBL" id="AY339587">
    <property type="protein sequence ID" value="AAP91443.1"/>
    <property type="molecule type" value="Genomic_DNA"/>
</dbReference>
<dbReference type="EMBL" id="AY339588">
    <property type="protein sequence ID" value="AAP91456.1"/>
    <property type="molecule type" value="Genomic_DNA"/>
</dbReference>
<dbReference type="EMBL" id="AY339589">
    <property type="protein sequence ID" value="AAP91469.1"/>
    <property type="molecule type" value="Genomic_DNA"/>
</dbReference>
<dbReference type="EMBL" id="AY339590">
    <property type="protein sequence ID" value="AAP91482.1"/>
    <property type="molecule type" value="Genomic_DNA"/>
</dbReference>
<dbReference type="EMBL" id="AY339591">
    <property type="protein sequence ID" value="AAP91495.1"/>
    <property type="molecule type" value="Genomic_DNA"/>
</dbReference>
<dbReference type="EMBL" id="AY339592">
    <property type="protein sequence ID" value="AAP91508.1"/>
    <property type="molecule type" value="Genomic_DNA"/>
</dbReference>
<dbReference type="EMBL" id="AY339593">
    <property type="protein sequence ID" value="AAP91521.1"/>
    <property type="molecule type" value="Genomic_DNA"/>
</dbReference>
<dbReference type="EMBL" id="AF346963">
    <property type="protein sequence ID" value="AAK17209.1"/>
    <property type="molecule type" value="Genomic_DNA"/>
</dbReference>
<dbReference type="EMBL" id="AF346964">
    <property type="protein sequence ID" value="AAK17222.1"/>
    <property type="molecule type" value="Genomic_DNA"/>
</dbReference>
<dbReference type="EMBL" id="AF346965">
    <property type="protein sequence ID" value="AAK17235.1"/>
    <property type="molecule type" value="Genomic_DNA"/>
</dbReference>
<dbReference type="EMBL" id="AF346966">
    <property type="protein sequence ID" value="AAK17248.1"/>
    <property type="molecule type" value="Genomic_DNA"/>
</dbReference>
<dbReference type="EMBL" id="AF346967">
    <property type="protein sequence ID" value="AAK17261.1"/>
    <property type="molecule type" value="Genomic_DNA"/>
</dbReference>
<dbReference type="EMBL" id="AF346970">
    <property type="protein sequence ID" value="AAK17300.1"/>
    <property type="molecule type" value="Genomic_DNA"/>
</dbReference>
<dbReference type="EMBL" id="AF346971">
    <property type="protein sequence ID" value="AAK17313.1"/>
    <property type="molecule type" value="Genomic_DNA"/>
</dbReference>
<dbReference type="EMBL" id="AF346972">
    <property type="protein sequence ID" value="AAK17326.1"/>
    <property type="molecule type" value="Genomic_DNA"/>
</dbReference>
<dbReference type="EMBL" id="AF346973">
    <property type="protein sequence ID" value="AAK17339.1"/>
    <property type="molecule type" value="Genomic_DNA"/>
</dbReference>
<dbReference type="EMBL" id="AF346974">
    <property type="protein sequence ID" value="AAK17352.1"/>
    <property type="molecule type" value="Genomic_DNA"/>
</dbReference>
<dbReference type="EMBL" id="AF346975">
    <property type="protein sequence ID" value="AAK17365.1"/>
    <property type="molecule type" value="Genomic_DNA"/>
</dbReference>
<dbReference type="EMBL" id="AF346976">
    <property type="protein sequence ID" value="AAK17378.1"/>
    <property type="molecule type" value="Genomic_DNA"/>
</dbReference>
<dbReference type="EMBL" id="AF346977">
    <property type="protein sequence ID" value="AAK17391.1"/>
    <property type="molecule type" value="Genomic_DNA"/>
</dbReference>
<dbReference type="EMBL" id="AF346978">
    <property type="protein sequence ID" value="AAK17404.1"/>
    <property type="molecule type" value="Genomic_DNA"/>
</dbReference>
<dbReference type="EMBL" id="AF346979">
    <property type="protein sequence ID" value="AAK17417.1"/>
    <property type="molecule type" value="Genomic_DNA"/>
</dbReference>
<dbReference type="EMBL" id="AF346980">
    <property type="protein sequence ID" value="AAK17430.1"/>
    <property type="molecule type" value="Genomic_DNA"/>
</dbReference>
<dbReference type="EMBL" id="AF346981">
    <property type="protein sequence ID" value="AAK17443.1"/>
    <property type="molecule type" value="Genomic_DNA"/>
</dbReference>
<dbReference type="EMBL" id="AF346982">
    <property type="protein sequence ID" value="AAK17456.1"/>
    <property type="molecule type" value="Genomic_DNA"/>
</dbReference>
<dbReference type="EMBL" id="AF346983">
    <property type="protein sequence ID" value="AAK17469.1"/>
    <property type="molecule type" value="Genomic_DNA"/>
</dbReference>
<dbReference type="EMBL" id="AF346984">
    <property type="protein sequence ID" value="AAK17482.1"/>
    <property type="molecule type" value="Genomic_DNA"/>
</dbReference>
<dbReference type="EMBL" id="AF346988">
    <property type="protein sequence ID" value="AAK17534.1"/>
    <property type="molecule type" value="Genomic_DNA"/>
</dbReference>
<dbReference type="EMBL" id="AF346989">
    <property type="protein sequence ID" value="AAK17547.1"/>
    <property type="molecule type" value="Genomic_DNA"/>
</dbReference>
<dbReference type="EMBL" id="AF346990">
    <property type="protein sequence ID" value="AAK17560.1"/>
    <property type="molecule type" value="Genomic_DNA"/>
</dbReference>
<dbReference type="EMBL" id="AF346991">
    <property type="protein sequence ID" value="AAK17573.1"/>
    <property type="molecule type" value="Genomic_DNA"/>
</dbReference>
<dbReference type="EMBL" id="AF346993">
    <property type="protein sequence ID" value="AAK17599.1"/>
    <property type="molecule type" value="Genomic_DNA"/>
</dbReference>
<dbReference type="EMBL" id="AF346994">
    <property type="protein sequence ID" value="AAK17612.1"/>
    <property type="molecule type" value="Genomic_DNA"/>
</dbReference>
<dbReference type="EMBL" id="AF346995">
    <property type="protein sequence ID" value="AAK17625.1"/>
    <property type="molecule type" value="Genomic_DNA"/>
</dbReference>
<dbReference type="EMBL" id="AF346998">
    <property type="protein sequence ID" value="AAK17664.1"/>
    <property type="molecule type" value="Genomic_DNA"/>
</dbReference>
<dbReference type="EMBL" id="AF347000">
    <property type="protein sequence ID" value="AAK17690.1"/>
    <property type="molecule type" value="Genomic_DNA"/>
</dbReference>
<dbReference type="EMBL" id="AF347001">
    <property type="protein sequence ID" value="AAK17703.1"/>
    <property type="molecule type" value="Genomic_DNA"/>
</dbReference>
<dbReference type="EMBL" id="AF347003">
    <property type="protein sequence ID" value="AAK17729.1"/>
    <property type="molecule type" value="Genomic_DNA"/>
</dbReference>
<dbReference type="EMBL" id="AF347004">
    <property type="protein sequence ID" value="AAK17742.1"/>
    <property type="molecule type" value="Genomic_DNA"/>
</dbReference>
<dbReference type="EMBL" id="AF347007">
    <property type="protein sequence ID" value="AAK17781.1"/>
    <property type="molecule type" value="Genomic_DNA"/>
</dbReference>
<dbReference type="EMBL" id="AF347010">
    <property type="protein sequence ID" value="AAK17820.1"/>
    <property type="molecule type" value="Genomic_DNA"/>
</dbReference>
<dbReference type="EMBL" id="AF347011">
    <property type="protein sequence ID" value="AAK17833.1"/>
    <property type="molecule type" value="Genomic_DNA"/>
</dbReference>
<dbReference type="EMBL" id="AF347012">
    <property type="protein sequence ID" value="AAK17846.1"/>
    <property type="molecule type" value="Genomic_DNA"/>
</dbReference>
<dbReference type="EMBL" id="AF347013">
    <property type="protein sequence ID" value="AAK17859.1"/>
    <property type="molecule type" value="Genomic_DNA"/>
</dbReference>
<dbReference type="EMBL" id="AF347014">
    <property type="protein sequence ID" value="AAK17872.1"/>
    <property type="molecule type" value="Genomic_DNA"/>
</dbReference>
<dbReference type="EMBL" id="AF347015">
    <property type="protein sequence ID" value="AAK17885.1"/>
    <property type="molecule type" value="Genomic_DNA"/>
</dbReference>
<dbReference type="EMBL" id="AY289051">
    <property type="protein sequence ID" value="AAP47882.1"/>
    <property type="molecule type" value="Genomic_DNA"/>
</dbReference>
<dbReference type="EMBL" id="AY289052">
    <property type="protein sequence ID" value="AAP47895.1"/>
    <property type="molecule type" value="Genomic_DNA"/>
</dbReference>
<dbReference type="EMBL" id="AY289053">
    <property type="protein sequence ID" value="AAP47908.1"/>
    <property type="molecule type" value="Genomic_DNA"/>
</dbReference>
<dbReference type="EMBL" id="AY289055">
    <property type="protein sequence ID" value="AAP47934.1"/>
    <property type="molecule type" value="Genomic_DNA"/>
</dbReference>
<dbReference type="EMBL" id="AY289056">
    <property type="protein sequence ID" value="AAP47947.1"/>
    <property type="molecule type" value="Genomic_DNA"/>
</dbReference>
<dbReference type="EMBL" id="AY289057">
    <property type="protein sequence ID" value="AAP47960.1"/>
    <property type="molecule type" value="Genomic_DNA"/>
</dbReference>
<dbReference type="EMBL" id="AY289058">
    <property type="protein sequence ID" value="AAP47973.1"/>
    <property type="molecule type" value="Genomic_DNA"/>
</dbReference>
<dbReference type="EMBL" id="AY289059">
    <property type="protein sequence ID" value="AAP47986.1"/>
    <property type="molecule type" value="Genomic_DNA"/>
</dbReference>
<dbReference type="EMBL" id="AY289060">
    <property type="protein sequence ID" value="AAP47999.1"/>
    <property type="molecule type" value="Genomic_DNA"/>
</dbReference>
<dbReference type="EMBL" id="AY289061">
    <property type="protein sequence ID" value="AAP48012.1"/>
    <property type="molecule type" value="Genomic_DNA"/>
</dbReference>
<dbReference type="EMBL" id="AY289062">
    <property type="protein sequence ID" value="AAP48025.1"/>
    <property type="molecule type" value="Genomic_DNA"/>
</dbReference>
<dbReference type="EMBL" id="AY289064">
    <property type="protein sequence ID" value="AAP48051.1"/>
    <property type="molecule type" value="Genomic_DNA"/>
</dbReference>
<dbReference type="EMBL" id="AY289065">
    <property type="protein sequence ID" value="AAP48064.1"/>
    <property type="molecule type" value="Genomic_DNA"/>
</dbReference>
<dbReference type="EMBL" id="AY289066">
    <property type="protein sequence ID" value="AAP48077.1"/>
    <property type="molecule type" value="Genomic_DNA"/>
</dbReference>
<dbReference type="EMBL" id="AY289067">
    <property type="protein sequence ID" value="AAP48090.1"/>
    <property type="molecule type" value="Genomic_DNA"/>
</dbReference>
<dbReference type="EMBL" id="AY289068">
    <property type="protein sequence ID" value="AAP48103.1"/>
    <property type="molecule type" value="Genomic_DNA"/>
</dbReference>
<dbReference type="EMBL" id="AY289069">
    <property type="protein sequence ID" value="AAP48116.1"/>
    <property type="molecule type" value="Genomic_DNA"/>
</dbReference>
<dbReference type="EMBL" id="AY289070">
    <property type="protein sequence ID" value="AAP48129.1"/>
    <property type="molecule type" value="Genomic_DNA"/>
</dbReference>
<dbReference type="EMBL" id="AY289071">
    <property type="protein sequence ID" value="AAP48142.1"/>
    <property type="molecule type" value="Genomic_DNA"/>
</dbReference>
<dbReference type="EMBL" id="AY289073">
    <property type="protein sequence ID" value="AAP48168.1"/>
    <property type="molecule type" value="Genomic_DNA"/>
</dbReference>
<dbReference type="EMBL" id="AY289074">
    <property type="protein sequence ID" value="AAP48181.1"/>
    <property type="molecule type" value="Genomic_DNA"/>
</dbReference>
<dbReference type="EMBL" id="AY289075">
    <property type="protein sequence ID" value="AAP48194.1"/>
    <property type="molecule type" value="Genomic_DNA"/>
</dbReference>
<dbReference type="EMBL" id="AY289076">
    <property type="protein sequence ID" value="AAP48207.1"/>
    <property type="molecule type" value="Genomic_DNA"/>
</dbReference>
<dbReference type="EMBL" id="AY289077">
    <property type="protein sequence ID" value="AAP48220.1"/>
    <property type="molecule type" value="Genomic_DNA"/>
</dbReference>
<dbReference type="EMBL" id="AY289078">
    <property type="protein sequence ID" value="AAP48233.1"/>
    <property type="molecule type" value="Genomic_DNA"/>
</dbReference>
<dbReference type="EMBL" id="AY289079">
    <property type="protein sequence ID" value="AAP48246.1"/>
    <property type="molecule type" value="Genomic_DNA"/>
</dbReference>
<dbReference type="EMBL" id="AY289080">
    <property type="protein sequence ID" value="AAP48259.1"/>
    <property type="molecule type" value="Genomic_DNA"/>
</dbReference>
<dbReference type="EMBL" id="AY289081">
    <property type="protein sequence ID" value="AAP48272.1"/>
    <property type="molecule type" value="Genomic_DNA"/>
</dbReference>
<dbReference type="EMBL" id="AY289082">
    <property type="protein sequence ID" value="AAP48285.1"/>
    <property type="molecule type" value="Genomic_DNA"/>
</dbReference>
<dbReference type="EMBL" id="AY289083">
    <property type="protein sequence ID" value="AAP48298.1"/>
    <property type="molecule type" value="Genomic_DNA"/>
</dbReference>
<dbReference type="EMBL" id="AY289084">
    <property type="protein sequence ID" value="AAP48311.1"/>
    <property type="molecule type" value="Genomic_DNA"/>
</dbReference>
<dbReference type="EMBL" id="AY289085">
    <property type="protein sequence ID" value="AAP48324.1"/>
    <property type="molecule type" value="Genomic_DNA"/>
</dbReference>
<dbReference type="EMBL" id="AY289086">
    <property type="protein sequence ID" value="AAP48337.1"/>
    <property type="molecule type" value="Genomic_DNA"/>
</dbReference>
<dbReference type="EMBL" id="AY289088">
    <property type="protein sequence ID" value="AAP48363.1"/>
    <property type="molecule type" value="Genomic_DNA"/>
</dbReference>
<dbReference type="EMBL" id="AY289089">
    <property type="protein sequence ID" value="AAP48376.1"/>
    <property type="molecule type" value="Genomic_DNA"/>
</dbReference>
<dbReference type="EMBL" id="AY289090">
    <property type="protein sequence ID" value="AAP48389.1"/>
    <property type="molecule type" value="Genomic_DNA"/>
</dbReference>
<dbReference type="EMBL" id="AY289092">
    <property type="protein sequence ID" value="AAP48415.1"/>
    <property type="molecule type" value="Genomic_DNA"/>
</dbReference>
<dbReference type="EMBL" id="AY289093">
    <property type="protein sequence ID" value="AAP48427.1"/>
    <property type="molecule type" value="Genomic_DNA"/>
</dbReference>
<dbReference type="EMBL" id="AY289094">
    <property type="protein sequence ID" value="AAP48440.1"/>
    <property type="molecule type" value="Genomic_DNA"/>
</dbReference>
<dbReference type="EMBL" id="AY289095">
    <property type="protein sequence ID" value="AAP48453.1"/>
    <property type="molecule type" value="Genomic_DNA"/>
</dbReference>
<dbReference type="EMBL" id="AY289096">
    <property type="protein sequence ID" value="AAP48466.1"/>
    <property type="molecule type" value="Genomic_DNA"/>
</dbReference>
<dbReference type="EMBL" id="AY289097">
    <property type="protein sequence ID" value="AAP48479.1"/>
    <property type="molecule type" value="Genomic_DNA"/>
</dbReference>
<dbReference type="EMBL" id="AY289098">
    <property type="protein sequence ID" value="AAP48492.1"/>
    <property type="molecule type" value="Genomic_DNA"/>
</dbReference>
<dbReference type="EMBL" id="AY289099">
    <property type="protein sequence ID" value="AAP48505.1"/>
    <property type="molecule type" value="Genomic_DNA"/>
</dbReference>
<dbReference type="EMBL" id="AY289100">
    <property type="protein sequence ID" value="AAP48518.1"/>
    <property type="molecule type" value="Genomic_DNA"/>
</dbReference>
<dbReference type="EMBL" id="AY289101">
    <property type="protein sequence ID" value="AAP48531.1"/>
    <property type="molecule type" value="Genomic_DNA"/>
</dbReference>
<dbReference type="EMBL" id="AY289102">
    <property type="protein sequence ID" value="AAP48544.1"/>
    <property type="molecule type" value="Genomic_DNA"/>
</dbReference>
<dbReference type="EMBL" id="AY495090">
    <property type="protein sequence ID" value="AAR92498.1"/>
    <property type="molecule type" value="Genomic_DNA"/>
</dbReference>
<dbReference type="EMBL" id="AY495091">
    <property type="protein sequence ID" value="AAR92511.1"/>
    <property type="molecule type" value="Genomic_DNA"/>
</dbReference>
<dbReference type="EMBL" id="AY495092">
    <property type="protein sequence ID" value="AAR92524.1"/>
    <property type="molecule type" value="Genomic_DNA"/>
</dbReference>
<dbReference type="EMBL" id="AY495093">
    <property type="protein sequence ID" value="AAR92537.1"/>
    <property type="molecule type" value="Genomic_DNA"/>
</dbReference>
<dbReference type="EMBL" id="AY495094">
    <property type="protein sequence ID" value="AAR92550.1"/>
    <property type="molecule type" value="Genomic_DNA"/>
</dbReference>
<dbReference type="EMBL" id="AY495095">
    <property type="protein sequence ID" value="AAR92563.1"/>
    <property type="molecule type" value="Genomic_DNA"/>
</dbReference>
<dbReference type="EMBL" id="AY495096">
    <property type="protein sequence ID" value="AAR92576.1"/>
    <property type="molecule type" value="Genomic_DNA"/>
</dbReference>
<dbReference type="EMBL" id="AY495097">
    <property type="protein sequence ID" value="AAR92589.1"/>
    <property type="molecule type" value="Genomic_DNA"/>
</dbReference>
<dbReference type="EMBL" id="AY495098">
    <property type="protein sequence ID" value="AAR92602.1"/>
    <property type="molecule type" value="Genomic_DNA"/>
</dbReference>
<dbReference type="EMBL" id="AY495099">
    <property type="protein sequence ID" value="AAR92615.1"/>
    <property type="molecule type" value="Genomic_DNA"/>
</dbReference>
<dbReference type="EMBL" id="AY495100">
    <property type="protein sequence ID" value="AAR92628.1"/>
    <property type="molecule type" value="Genomic_DNA"/>
</dbReference>
<dbReference type="EMBL" id="AY495101">
    <property type="protein sequence ID" value="AAR92641.1"/>
    <property type="molecule type" value="Genomic_DNA"/>
</dbReference>
<dbReference type="EMBL" id="AY495102">
    <property type="protein sequence ID" value="AAR92654.1"/>
    <property type="molecule type" value="Genomic_DNA"/>
</dbReference>
<dbReference type="EMBL" id="AY495103">
    <property type="protein sequence ID" value="AAR92667.1"/>
    <property type="molecule type" value="Genomic_DNA"/>
</dbReference>
<dbReference type="EMBL" id="AY495104">
    <property type="protein sequence ID" value="AAR92680.1"/>
    <property type="molecule type" value="Genomic_DNA"/>
</dbReference>
<dbReference type="EMBL" id="AY495105">
    <property type="protein sequence ID" value="AAR92693.1"/>
    <property type="molecule type" value="Genomic_DNA"/>
</dbReference>
<dbReference type="EMBL" id="AY495106">
    <property type="protein sequence ID" value="AAR92706.1"/>
    <property type="molecule type" value="Genomic_DNA"/>
</dbReference>
<dbReference type="EMBL" id="AY495107">
    <property type="protein sequence ID" value="AAR92719.1"/>
    <property type="molecule type" value="Genomic_DNA"/>
</dbReference>
<dbReference type="EMBL" id="AY495108">
    <property type="protein sequence ID" value="AAR92732.1"/>
    <property type="molecule type" value="Genomic_DNA"/>
</dbReference>
<dbReference type="EMBL" id="AY495109">
    <property type="protein sequence ID" value="AAR92745.1"/>
    <property type="molecule type" value="Genomic_DNA"/>
</dbReference>
<dbReference type="EMBL" id="AY495110">
    <property type="protein sequence ID" value="AAR92758.1"/>
    <property type="molecule type" value="Genomic_DNA"/>
</dbReference>
<dbReference type="EMBL" id="AY495111">
    <property type="protein sequence ID" value="AAR92771.1"/>
    <property type="molecule type" value="Genomic_DNA"/>
</dbReference>
<dbReference type="EMBL" id="AY495112">
    <property type="protein sequence ID" value="AAR92784.1"/>
    <property type="molecule type" value="Genomic_DNA"/>
</dbReference>
<dbReference type="EMBL" id="AY495113">
    <property type="protein sequence ID" value="AAR92797.1"/>
    <property type="molecule type" value="Genomic_DNA"/>
</dbReference>
<dbReference type="EMBL" id="AY495114">
    <property type="protein sequence ID" value="AAR92810.1"/>
    <property type="molecule type" value="Genomic_DNA"/>
</dbReference>
<dbReference type="EMBL" id="AY495116">
    <property type="protein sequence ID" value="AAR92836.1"/>
    <property type="molecule type" value="Genomic_DNA"/>
</dbReference>
<dbReference type="EMBL" id="AY495117">
    <property type="protein sequence ID" value="AAR92849.1"/>
    <property type="molecule type" value="Genomic_DNA"/>
</dbReference>
<dbReference type="EMBL" id="AY495118">
    <property type="protein sequence ID" value="AAR92862.1"/>
    <property type="molecule type" value="Genomic_DNA"/>
</dbReference>
<dbReference type="EMBL" id="AY495119">
    <property type="protein sequence ID" value="AAR92875.1"/>
    <property type="molecule type" value="Genomic_DNA"/>
</dbReference>
<dbReference type="EMBL" id="AY495120">
    <property type="protein sequence ID" value="AAR92888.1"/>
    <property type="molecule type" value="Genomic_DNA"/>
</dbReference>
<dbReference type="EMBL" id="AY495121">
    <property type="protein sequence ID" value="AAR92901.1"/>
    <property type="molecule type" value="Genomic_DNA"/>
</dbReference>
<dbReference type="EMBL" id="AY495122">
    <property type="protein sequence ID" value="AAR92914.1"/>
    <property type="molecule type" value="Genomic_DNA"/>
</dbReference>
<dbReference type="EMBL" id="AY495123">
    <property type="protein sequence ID" value="AAR92927.1"/>
    <property type="molecule type" value="Genomic_DNA"/>
</dbReference>
<dbReference type="EMBL" id="AY495124">
    <property type="protein sequence ID" value="AAR92940.1"/>
    <property type="molecule type" value="Genomic_DNA"/>
</dbReference>
<dbReference type="EMBL" id="AY495125">
    <property type="protein sequence ID" value="AAR92953.1"/>
    <property type="molecule type" value="Genomic_DNA"/>
</dbReference>
<dbReference type="EMBL" id="AY495126">
    <property type="protein sequence ID" value="AAR92966.1"/>
    <property type="molecule type" value="Genomic_DNA"/>
</dbReference>
<dbReference type="EMBL" id="AY495127">
    <property type="protein sequence ID" value="AAR92979.1"/>
    <property type="molecule type" value="Genomic_DNA"/>
</dbReference>
<dbReference type="EMBL" id="AY495128">
    <property type="protein sequence ID" value="AAR92992.1"/>
    <property type="molecule type" value="Genomic_DNA"/>
</dbReference>
<dbReference type="EMBL" id="AY495129">
    <property type="protein sequence ID" value="AAR93005.1"/>
    <property type="molecule type" value="Genomic_DNA"/>
</dbReference>
<dbReference type="EMBL" id="AY495130">
    <property type="protein sequence ID" value="AAR93018.1"/>
    <property type="molecule type" value="Genomic_DNA"/>
</dbReference>
<dbReference type="EMBL" id="AY495131">
    <property type="protein sequence ID" value="AAR93031.1"/>
    <property type="molecule type" value="Genomic_DNA"/>
</dbReference>
<dbReference type="EMBL" id="AY495132">
    <property type="protein sequence ID" value="AAR93044.1"/>
    <property type="molecule type" value="Genomic_DNA"/>
</dbReference>
<dbReference type="EMBL" id="AY495133">
    <property type="protein sequence ID" value="AAR93057.1"/>
    <property type="molecule type" value="Genomic_DNA"/>
</dbReference>
<dbReference type="EMBL" id="AY495134">
    <property type="protein sequence ID" value="AAR93070.1"/>
    <property type="molecule type" value="Genomic_DNA"/>
</dbReference>
<dbReference type="EMBL" id="AY495135">
    <property type="protein sequence ID" value="AAR93083.1"/>
    <property type="molecule type" value="Genomic_DNA"/>
</dbReference>
<dbReference type="EMBL" id="AY495136">
    <property type="protein sequence ID" value="AAR93096.1"/>
    <property type="molecule type" value="Genomic_DNA"/>
</dbReference>
<dbReference type="EMBL" id="AY495137">
    <property type="protein sequence ID" value="AAR93109.1"/>
    <property type="molecule type" value="Genomic_DNA"/>
</dbReference>
<dbReference type="EMBL" id="AY495138">
    <property type="protein sequence ID" value="AAR93122.1"/>
    <property type="molecule type" value="Genomic_DNA"/>
</dbReference>
<dbReference type="EMBL" id="AY495139">
    <property type="protein sequence ID" value="AAR93135.1"/>
    <property type="molecule type" value="Genomic_DNA"/>
</dbReference>
<dbReference type="EMBL" id="AY495140">
    <property type="protein sequence ID" value="AAR93148.1"/>
    <property type="molecule type" value="Genomic_DNA"/>
</dbReference>
<dbReference type="EMBL" id="AY495141">
    <property type="protein sequence ID" value="AAR93161.1"/>
    <property type="molecule type" value="Genomic_DNA"/>
</dbReference>
<dbReference type="EMBL" id="AY495142">
    <property type="protein sequence ID" value="AAR93174.1"/>
    <property type="molecule type" value="Genomic_DNA"/>
</dbReference>
<dbReference type="EMBL" id="AY495143">
    <property type="protein sequence ID" value="AAR93187.1"/>
    <property type="molecule type" value="Genomic_DNA"/>
</dbReference>
<dbReference type="EMBL" id="AY495144">
    <property type="protein sequence ID" value="AAR93200.1"/>
    <property type="molecule type" value="Genomic_DNA"/>
</dbReference>
<dbReference type="EMBL" id="AY495145">
    <property type="protein sequence ID" value="AAR93213.1"/>
    <property type="molecule type" value="Genomic_DNA"/>
</dbReference>
<dbReference type="EMBL" id="AY495147">
    <property type="protein sequence ID" value="AAR93239.1"/>
    <property type="molecule type" value="Genomic_DNA"/>
</dbReference>
<dbReference type="EMBL" id="AY495148">
    <property type="protein sequence ID" value="AAR93252.1"/>
    <property type="molecule type" value="Genomic_DNA"/>
</dbReference>
<dbReference type="EMBL" id="AY495149">
    <property type="protein sequence ID" value="AAR93265.1"/>
    <property type="molecule type" value="Genomic_DNA"/>
</dbReference>
<dbReference type="EMBL" id="AY495150">
    <property type="protein sequence ID" value="AAR93278.1"/>
    <property type="molecule type" value="Genomic_DNA"/>
</dbReference>
<dbReference type="EMBL" id="AY495151">
    <property type="protein sequence ID" value="AAR93291.1"/>
    <property type="molecule type" value="Genomic_DNA"/>
</dbReference>
<dbReference type="EMBL" id="AY495152">
    <property type="protein sequence ID" value="AAR93304.1"/>
    <property type="molecule type" value="Genomic_DNA"/>
</dbReference>
<dbReference type="EMBL" id="AY495153">
    <property type="protein sequence ID" value="AAR93317.1"/>
    <property type="molecule type" value="Genomic_DNA"/>
</dbReference>
<dbReference type="EMBL" id="AY495154">
    <property type="protein sequence ID" value="AAR93330.1"/>
    <property type="molecule type" value="Genomic_DNA"/>
</dbReference>
<dbReference type="EMBL" id="AY495155">
    <property type="protein sequence ID" value="AAR93343.1"/>
    <property type="molecule type" value="Genomic_DNA"/>
</dbReference>
<dbReference type="EMBL" id="AY495156">
    <property type="protein sequence ID" value="AAR93356.1"/>
    <property type="molecule type" value="Genomic_DNA"/>
</dbReference>
<dbReference type="EMBL" id="AY495157">
    <property type="protein sequence ID" value="AAR93369.1"/>
    <property type="molecule type" value="Genomic_DNA"/>
</dbReference>
<dbReference type="EMBL" id="AY495158">
    <property type="protein sequence ID" value="AAR93382.1"/>
    <property type="molecule type" value="Genomic_DNA"/>
</dbReference>
<dbReference type="EMBL" id="AY495159">
    <property type="protein sequence ID" value="AAR93395.1"/>
    <property type="molecule type" value="Genomic_DNA"/>
</dbReference>
<dbReference type="EMBL" id="AY495160">
    <property type="protein sequence ID" value="AAR93408.1"/>
    <property type="molecule type" value="Genomic_DNA"/>
</dbReference>
<dbReference type="EMBL" id="AY495161">
    <property type="protein sequence ID" value="AAR93421.1"/>
    <property type="molecule type" value="Genomic_DNA"/>
</dbReference>
<dbReference type="EMBL" id="AY495162">
    <property type="protein sequence ID" value="AAR93434.1"/>
    <property type="molecule type" value="Genomic_DNA"/>
</dbReference>
<dbReference type="EMBL" id="AY495163">
    <property type="protein sequence ID" value="AAR93447.1"/>
    <property type="molecule type" value="Genomic_DNA"/>
</dbReference>
<dbReference type="EMBL" id="AY495164">
    <property type="protein sequence ID" value="AAR93460.1"/>
    <property type="molecule type" value="Genomic_DNA"/>
</dbReference>
<dbReference type="EMBL" id="AY495165">
    <property type="protein sequence ID" value="AAR93473.1"/>
    <property type="molecule type" value="Genomic_DNA"/>
</dbReference>
<dbReference type="EMBL" id="AY495166">
    <property type="protein sequence ID" value="AAR93486.1"/>
    <property type="molecule type" value="Genomic_DNA"/>
</dbReference>
<dbReference type="EMBL" id="AY495167">
    <property type="protein sequence ID" value="AAR93499.1"/>
    <property type="molecule type" value="Genomic_DNA"/>
</dbReference>
<dbReference type="EMBL" id="AY495168">
    <property type="protein sequence ID" value="AAR93512.1"/>
    <property type="molecule type" value="Genomic_DNA"/>
</dbReference>
<dbReference type="EMBL" id="AY495169">
    <property type="protein sequence ID" value="AAR93525.1"/>
    <property type="molecule type" value="Genomic_DNA"/>
</dbReference>
<dbReference type="EMBL" id="AY495170">
    <property type="protein sequence ID" value="AAR93538.1"/>
    <property type="molecule type" value="Genomic_DNA"/>
</dbReference>
<dbReference type="EMBL" id="AY495171">
    <property type="protein sequence ID" value="AAR93551.1"/>
    <property type="molecule type" value="Genomic_DNA"/>
</dbReference>
<dbReference type="EMBL" id="AY495172">
    <property type="protein sequence ID" value="AAR93564.1"/>
    <property type="molecule type" value="Genomic_DNA"/>
</dbReference>
<dbReference type="EMBL" id="AY495173">
    <property type="protein sequence ID" value="AAR93577.1"/>
    <property type="molecule type" value="Genomic_DNA"/>
</dbReference>
<dbReference type="EMBL" id="AY495174">
    <property type="protein sequence ID" value="AAR93590.1"/>
    <property type="molecule type" value="Genomic_DNA"/>
</dbReference>
<dbReference type="EMBL" id="AY495175">
    <property type="protein sequence ID" value="AAR93603.1"/>
    <property type="molecule type" value="Genomic_DNA"/>
</dbReference>
<dbReference type="EMBL" id="AY495176">
    <property type="protein sequence ID" value="AAR93616.1"/>
    <property type="molecule type" value="Genomic_DNA"/>
</dbReference>
<dbReference type="EMBL" id="AY495177">
    <property type="protein sequence ID" value="AAR93629.1"/>
    <property type="molecule type" value="Genomic_DNA"/>
</dbReference>
<dbReference type="EMBL" id="AY495178">
    <property type="protein sequence ID" value="AAR93642.1"/>
    <property type="molecule type" value="Genomic_DNA"/>
</dbReference>
<dbReference type="EMBL" id="AY495179">
    <property type="protein sequence ID" value="AAR93655.1"/>
    <property type="molecule type" value="Genomic_DNA"/>
</dbReference>
<dbReference type="EMBL" id="AY495180">
    <property type="protein sequence ID" value="AAR93668.1"/>
    <property type="molecule type" value="Genomic_DNA"/>
</dbReference>
<dbReference type="EMBL" id="AY495181">
    <property type="protein sequence ID" value="AAR93681.1"/>
    <property type="molecule type" value="Genomic_DNA"/>
</dbReference>
<dbReference type="EMBL" id="AY495182">
    <property type="protein sequence ID" value="AAR93694.1"/>
    <property type="molecule type" value="Genomic_DNA"/>
</dbReference>
<dbReference type="EMBL" id="AY495183">
    <property type="protein sequence ID" value="AAR93707.1"/>
    <property type="molecule type" value="Genomic_DNA"/>
</dbReference>
<dbReference type="EMBL" id="AY495184">
    <property type="protein sequence ID" value="AAR93720.1"/>
    <property type="molecule type" value="Genomic_DNA"/>
</dbReference>
<dbReference type="EMBL" id="AY495185">
    <property type="protein sequence ID" value="AAR93733.1"/>
    <property type="molecule type" value="Genomic_DNA"/>
</dbReference>
<dbReference type="EMBL" id="AY495186">
    <property type="protein sequence ID" value="AAR93746.1"/>
    <property type="molecule type" value="Genomic_DNA"/>
</dbReference>
<dbReference type="EMBL" id="AY495187">
    <property type="protein sequence ID" value="AAR93759.1"/>
    <property type="molecule type" value="Genomic_DNA"/>
</dbReference>
<dbReference type="EMBL" id="AY495188">
    <property type="protein sequence ID" value="AAR93772.1"/>
    <property type="molecule type" value="Genomic_DNA"/>
</dbReference>
<dbReference type="EMBL" id="AY495189">
    <property type="protein sequence ID" value="AAR93785.1"/>
    <property type="molecule type" value="Genomic_DNA"/>
</dbReference>
<dbReference type="EMBL" id="AY495190">
    <property type="protein sequence ID" value="AAR93798.1"/>
    <property type="molecule type" value="Genomic_DNA"/>
</dbReference>
<dbReference type="EMBL" id="AY495191">
    <property type="protein sequence ID" value="AAR93811.1"/>
    <property type="molecule type" value="Genomic_DNA"/>
</dbReference>
<dbReference type="EMBL" id="AY495192">
    <property type="protein sequence ID" value="AAR93824.1"/>
    <property type="molecule type" value="Genomic_DNA"/>
</dbReference>
<dbReference type="EMBL" id="AY495193">
    <property type="protein sequence ID" value="AAR93837.1"/>
    <property type="molecule type" value="Genomic_DNA"/>
</dbReference>
<dbReference type="EMBL" id="AY495194">
    <property type="protein sequence ID" value="AAR93850.1"/>
    <property type="molecule type" value="Genomic_DNA"/>
</dbReference>
<dbReference type="EMBL" id="AY495195">
    <property type="protein sequence ID" value="AAR93863.1"/>
    <property type="molecule type" value="Genomic_DNA"/>
</dbReference>
<dbReference type="EMBL" id="AY495196">
    <property type="protein sequence ID" value="AAR93876.1"/>
    <property type="molecule type" value="Genomic_DNA"/>
</dbReference>
<dbReference type="EMBL" id="AY495197">
    <property type="protein sequence ID" value="AAR93889.1"/>
    <property type="molecule type" value="Genomic_DNA"/>
</dbReference>
<dbReference type="EMBL" id="AY495198">
    <property type="protein sequence ID" value="AAR93902.1"/>
    <property type="molecule type" value="Genomic_DNA"/>
</dbReference>
<dbReference type="EMBL" id="AY495199">
    <property type="protein sequence ID" value="AAR93915.1"/>
    <property type="molecule type" value="Genomic_DNA"/>
</dbReference>
<dbReference type="EMBL" id="AY495200">
    <property type="protein sequence ID" value="AAR93928.1"/>
    <property type="molecule type" value="Genomic_DNA"/>
</dbReference>
<dbReference type="EMBL" id="AY495201">
    <property type="protein sequence ID" value="AAR93941.1"/>
    <property type="molecule type" value="Genomic_DNA"/>
</dbReference>
<dbReference type="EMBL" id="AY495202">
    <property type="protein sequence ID" value="AAR93954.1"/>
    <property type="molecule type" value="Genomic_DNA"/>
</dbReference>
<dbReference type="EMBL" id="AY495203">
    <property type="protein sequence ID" value="AAR93967.1"/>
    <property type="molecule type" value="Genomic_DNA"/>
</dbReference>
<dbReference type="EMBL" id="AY495204">
    <property type="protein sequence ID" value="AAR93980.1"/>
    <property type="molecule type" value="Genomic_DNA"/>
</dbReference>
<dbReference type="EMBL" id="AY495205">
    <property type="protein sequence ID" value="AAR93993.1"/>
    <property type="molecule type" value="Genomic_DNA"/>
</dbReference>
<dbReference type="EMBL" id="AY495206">
    <property type="protein sequence ID" value="AAR94006.1"/>
    <property type="molecule type" value="Genomic_DNA"/>
</dbReference>
<dbReference type="EMBL" id="AY495207">
    <property type="protein sequence ID" value="AAR94019.1"/>
    <property type="molecule type" value="Genomic_DNA"/>
</dbReference>
<dbReference type="EMBL" id="AY495208">
    <property type="protein sequence ID" value="AAR94032.1"/>
    <property type="molecule type" value="Genomic_DNA"/>
</dbReference>
<dbReference type="EMBL" id="AY495209">
    <property type="protein sequence ID" value="AAR94045.1"/>
    <property type="molecule type" value="Genomic_DNA"/>
</dbReference>
<dbReference type="EMBL" id="AY495210">
    <property type="protein sequence ID" value="AAR94058.1"/>
    <property type="molecule type" value="Genomic_DNA"/>
</dbReference>
<dbReference type="EMBL" id="AY495211">
    <property type="protein sequence ID" value="AAR94071.1"/>
    <property type="molecule type" value="Genomic_DNA"/>
</dbReference>
<dbReference type="EMBL" id="AY495212">
    <property type="protein sequence ID" value="AAR94084.1"/>
    <property type="molecule type" value="Genomic_DNA"/>
</dbReference>
<dbReference type="EMBL" id="AY495213">
    <property type="protein sequence ID" value="AAR94097.1"/>
    <property type="molecule type" value="Genomic_DNA"/>
</dbReference>
<dbReference type="EMBL" id="AY495214">
    <property type="protein sequence ID" value="AAR94110.1"/>
    <property type="molecule type" value="Genomic_DNA"/>
</dbReference>
<dbReference type="EMBL" id="AY495215">
    <property type="protein sequence ID" value="AAR94123.1"/>
    <property type="molecule type" value="Genomic_DNA"/>
</dbReference>
<dbReference type="EMBL" id="AY495216">
    <property type="protein sequence ID" value="AAR94136.1"/>
    <property type="molecule type" value="Genomic_DNA"/>
</dbReference>
<dbReference type="EMBL" id="AY495217">
    <property type="protein sequence ID" value="AAR94149.1"/>
    <property type="molecule type" value="Genomic_DNA"/>
</dbReference>
<dbReference type="EMBL" id="AY495218">
    <property type="protein sequence ID" value="AAR94162.1"/>
    <property type="molecule type" value="Genomic_DNA"/>
</dbReference>
<dbReference type="EMBL" id="AY495219">
    <property type="protein sequence ID" value="AAR94175.1"/>
    <property type="molecule type" value="Genomic_DNA"/>
</dbReference>
<dbReference type="EMBL" id="AY495220">
    <property type="protein sequence ID" value="AAR94188.1"/>
    <property type="molecule type" value="Genomic_DNA"/>
</dbReference>
<dbReference type="EMBL" id="AY495221">
    <property type="protein sequence ID" value="AAR94201.1"/>
    <property type="molecule type" value="Genomic_DNA"/>
</dbReference>
<dbReference type="EMBL" id="AY495222">
    <property type="protein sequence ID" value="AAR94214.1"/>
    <property type="molecule type" value="Genomic_DNA"/>
</dbReference>
<dbReference type="EMBL" id="AY495223">
    <property type="protein sequence ID" value="AAR94227.1"/>
    <property type="molecule type" value="Genomic_DNA"/>
</dbReference>
<dbReference type="EMBL" id="AY495224">
    <property type="protein sequence ID" value="AAR94240.1"/>
    <property type="molecule type" value="Genomic_DNA"/>
</dbReference>
<dbReference type="EMBL" id="AY495225">
    <property type="protein sequence ID" value="AAR94253.1"/>
    <property type="molecule type" value="Genomic_DNA"/>
</dbReference>
<dbReference type="EMBL" id="AY495226">
    <property type="protein sequence ID" value="AAR94266.1"/>
    <property type="molecule type" value="Genomic_DNA"/>
</dbReference>
<dbReference type="EMBL" id="AY495228">
    <property type="protein sequence ID" value="AAR94292.1"/>
    <property type="molecule type" value="Genomic_DNA"/>
</dbReference>
<dbReference type="EMBL" id="AY495230">
    <property type="protein sequence ID" value="AAR94318.1"/>
    <property type="molecule type" value="Genomic_DNA"/>
</dbReference>
<dbReference type="EMBL" id="AY495231">
    <property type="protein sequence ID" value="AAR94331.1"/>
    <property type="molecule type" value="Genomic_DNA"/>
</dbReference>
<dbReference type="EMBL" id="AY495232">
    <property type="protein sequence ID" value="AAR94344.1"/>
    <property type="molecule type" value="Genomic_DNA"/>
</dbReference>
<dbReference type="EMBL" id="AY495233">
    <property type="protein sequence ID" value="AAR94357.1"/>
    <property type="molecule type" value="Genomic_DNA"/>
</dbReference>
<dbReference type="EMBL" id="AY495234">
    <property type="protein sequence ID" value="AAR94370.1"/>
    <property type="molecule type" value="Genomic_DNA"/>
</dbReference>
<dbReference type="EMBL" id="AY495235">
    <property type="protein sequence ID" value="AAR94383.1"/>
    <property type="molecule type" value="Genomic_DNA"/>
</dbReference>
<dbReference type="EMBL" id="AY495236">
    <property type="protein sequence ID" value="AAR94396.1"/>
    <property type="molecule type" value="Genomic_DNA"/>
</dbReference>
<dbReference type="EMBL" id="AY495237">
    <property type="protein sequence ID" value="AAR94409.1"/>
    <property type="molecule type" value="Genomic_DNA"/>
</dbReference>
<dbReference type="EMBL" id="AY495239">
    <property type="protein sequence ID" value="AAR94435.1"/>
    <property type="molecule type" value="Genomic_DNA"/>
</dbReference>
<dbReference type="EMBL" id="AY495240">
    <property type="protein sequence ID" value="AAR94448.1"/>
    <property type="molecule type" value="Genomic_DNA"/>
</dbReference>
<dbReference type="EMBL" id="AY495241">
    <property type="protein sequence ID" value="AAR94461.1"/>
    <property type="molecule type" value="Genomic_DNA"/>
</dbReference>
<dbReference type="EMBL" id="AY495242">
    <property type="protein sequence ID" value="AAR94474.1"/>
    <property type="molecule type" value="Genomic_DNA"/>
</dbReference>
<dbReference type="EMBL" id="AY495243">
    <property type="protein sequence ID" value="AAR94487.1"/>
    <property type="molecule type" value="Genomic_DNA"/>
</dbReference>
<dbReference type="EMBL" id="AY495244">
    <property type="protein sequence ID" value="AAR94500.1"/>
    <property type="molecule type" value="Genomic_DNA"/>
</dbReference>
<dbReference type="EMBL" id="AY495245">
    <property type="protein sequence ID" value="AAR94513.1"/>
    <property type="molecule type" value="Genomic_DNA"/>
</dbReference>
<dbReference type="EMBL" id="AY495246">
    <property type="protein sequence ID" value="AAR94526.1"/>
    <property type="molecule type" value="Genomic_DNA"/>
</dbReference>
<dbReference type="EMBL" id="AY495247">
    <property type="protein sequence ID" value="AAR94539.1"/>
    <property type="molecule type" value="Genomic_DNA"/>
</dbReference>
<dbReference type="EMBL" id="AY495248">
    <property type="protein sequence ID" value="AAR94552.1"/>
    <property type="molecule type" value="Genomic_DNA"/>
</dbReference>
<dbReference type="EMBL" id="AY495249">
    <property type="protein sequence ID" value="AAR94565.1"/>
    <property type="molecule type" value="Genomic_DNA"/>
</dbReference>
<dbReference type="EMBL" id="AY495250">
    <property type="protein sequence ID" value="AAR94578.1"/>
    <property type="molecule type" value="Genomic_DNA"/>
</dbReference>
<dbReference type="EMBL" id="AY495251">
    <property type="protein sequence ID" value="AAR94591.1"/>
    <property type="molecule type" value="Genomic_DNA"/>
</dbReference>
<dbReference type="EMBL" id="AY495252">
    <property type="protein sequence ID" value="AAR94604.1"/>
    <property type="molecule type" value="Genomic_DNA"/>
</dbReference>
<dbReference type="EMBL" id="AY495253">
    <property type="protein sequence ID" value="AAR94617.1"/>
    <property type="molecule type" value="Genomic_DNA"/>
</dbReference>
<dbReference type="EMBL" id="AY495254">
    <property type="protein sequence ID" value="AAR94630.1"/>
    <property type="molecule type" value="Genomic_DNA"/>
</dbReference>
<dbReference type="EMBL" id="AY495255">
    <property type="protein sequence ID" value="AAR94643.1"/>
    <property type="molecule type" value="Genomic_DNA"/>
</dbReference>
<dbReference type="EMBL" id="AY495256">
    <property type="protein sequence ID" value="AAR94656.1"/>
    <property type="molecule type" value="Genomic_DNA"/>
</dbReference>
<dbReference type="EMBL" id="AY495258">
    <property type="protein sequence ID" value="AAR94682.1"/>
    <property type="molecule type" value="Genomic_DNA"/>
</dbReference>
<dbReference type="EMBL" id="AY495259">
    <property type="protein sequence ID" value="AAR94695.1"/>
    <property type="molecule type" value="Genomic_DNA"/>
</dbReference>
<dbReference type="EMBL" id="AY495261">
    <property type="protein sequence ID" value="AAR94721.1"/>
    <property type="molecule type" value="Genomic_DNA"/>
</dbReference>
<dbReference type="EMBL" id="AY495262">
    <property type="protein sequence ID" value="AAR94734.1"/>
    <property type="molecule type" value="Genomic_DNA"/>
</dbReference>
<dbReference type="EMBL" id="AY495263">
    <property type="protein sequence ID" value="AAR94747.1"/>
    <property type="molecule type" value="Genomic_DNA"/>
</dbReference>
<dbReference type="EMBL" id="AY495264">
    <property type="protein sequence ID" value="AAR94760.1"/>
    <property type="molecule type" value="Genomic_DNA"/>
</dbReference>
<dbReference type="EMBL" id="AY495265">
    <property type="protein sequence ID" value="AAR94773.1"/>
    <property type="molecule type" value="Genomic_DNA"/>
</dbReference>
<dbReference type="EMBL" id="AY495266">
    <property type="protein sequence ID" value="AAR94786.1"/>
    <property type="molecule type" value="Genomic_DNA"/>
</dbReference>
<dbReference type="EMBL" id="AY495267">
    <property type="protein sequence ID" value="AAR94799.1"/>
    <property type="molecule type" value="Genomic_DNA"/>
</dbReference>
<dbReference type="EMBL" id="AY495268">
    <property type="protein sequence ID" value="AAR94812.1"/>
    <property type="molecule type" value="Genomic_DNA"/>
</dbReference>
<dbReference type="EMBL" id="AY495269">
    <property type="protein sequence ID" value="AAR94825.1"/>
    <property type="molecule type" value="Genomic_DNA"/>
</dbReference>
<dbReference type="EMBL" id="AY495270">
    <property type="protein sequence ID" value="AAR94838.1"/>
    <property type="molecule type" value="Genomic_DNA"/>
</dbReference>
<dbReference type="EMBL" id="AY495271">
    <property type="protein sequence ID" value="AAR94851.1"/>
    <property type="molecule type" value="Genomic_DNA"/>
</dbReference>
<dbReference type="EMBL" id="AY495272">
    <property type="protein sequence ID" value="AAR94864.1"/>
    <property type="molecule type" value="Genomic_DNA"/>
</dbReference>
<dbReference type="EMBL" id="AY495273">
    <property type="protein sequence ID" value="AAR94877.1"/>
    <property type="molecule type" value="Genomic_DNA"/>
</dbReference>
<dbReference type="EMBL" id="AY495274">
    <property type="protein sequence ID" value="AAR94890.1"/>
    <property type="molecule type" value="Genomic_DNA"/>
</dbReference>
<dbReference type="EMBL" id="AY495275">
    <property type="protein sequence ID" value="AAR94903.1"/>
    <property type="molecule type" value="Genomic_DNA"/>
</dbReference>
<dbReference type="EMBL" id="AY495276">
    <property type="protein sequence ID" value="AAR94916.1"/>
    <property type="molecule type" value="Genomic_DNA"/>
</dbReference>
<dbReference type="EMBL" id="AY495277">
    <property type="protein sequence ID" value="AAR94929.1"/>
    <property type="molecule type" value="Genomic_DNA"/>
</dbReference>
<dbReference type="EMBL" id="AY495278">
    <property type="protein sequence ID" value="AAR94942.1"/>
    <property type="molecule type" value="Genomic_DNA"/>
</dbReference>
<dbReference type="EMBL" id="AY495279">
    <property type="protein sequence ID" value="AAR94955.1"/>
    <property type="molecule type" value="Genomic_DNA"/>
</dbReference>
<dbReference type="EMBL" id="AY495280">
    <property type="protein sequence ID" value="AAR94968.1"/>
    <property type="molecule type" value="Genomic_DNA"/>
</dbReference>
<dbReference type="EMBL" id="AY495281">
    <property type="protein sequence ID" value="AAR94981.1"/>
    <property type="molecule type" value="Genomic_DNA"/>
</dbReference>
<dbReference type="EMBL" id="AY495282">
    <property type="protein sequence ID" value="AAR94994.1"/>
    <property type="molecule type" value="Genomic_DNA"/>
</dbReference>
<dbReference type="EMBL" id="AY495283">
    <property type="protein sequence ID" value="AAR95007.1"/>
    <property type="molecule type" value="Genomic_DNA"/>
</dbReference>
<dbReference type="EMBL" id="AY495284">
    <property type="protein sequence ID" value="AAR95020.1"/>
    <property type="molecule type" value="Genomic_DNA"/>
</dbReference>
<dbReference type="EMBL" id="AY495285">
    <property type="protein sequence ID" value="AAR95033.1"/>
    <property type="molecule type" value="Genomic_DNA"/>
</dbReference>
<dbReference type="EMBL" id="AY495286">
    <property type="protein sequence ID" value="AAR95046.1"/>
    <property type="molecule type" value="Genomic_DNA"/>
</dbReference>
<dbReference type="EMBL" id="AY495287">
    <property type="protein sequence ID" value="AAR95059.1"/>
    <property type="molecule type" value="Genomic_DNA"/>
</dbReference>
<dbReference type="EMBL" id="AY495288">
    <property type="protein sequence ID" value="AAR95072.1"/>
    <property type="molecule type" value="Genomic_DNA"/>
</dbReference>
<dbReference type="EMBL" id="AY495289">
    <property type="protein sequence ID" value="AAR95085.1"/>
    <property type="molecule type" value="Genomic_DNA"/>
</dbReference>
<dbReference type="EMBL" id="AY495290">
    <property type="protein sequence ID" value="AAR95098.1"/>
    <property type="molecule type" value="Genomic_DNA"/>
</dbReference>
<dbReference type="EMBL" id="AY495291">
    <property type="protein sequence ID" value="AAR95111.1"/>
    <property type="molecule type" value="Genomic_DNA"/>
</dbReference>
<dbReference type="EMBL" id="AY495292">
    <property type="protein sequence ID" value="AAR95124.1"/>
    <property type="molecule type" value="Genomic_DNA"/>
</dbReference>
<dbReference type="EMBL" id="AY495293">
    <property type="protein sequence ID" value="AAR95137.1"/>
    <property type="molecule type" value="Genomic_DNA"/>
</dbReference>
<dbReference type="EMBL" id="AY495294">
    <property type="protein sequence ID" value="AAR95150.1"/>
    <property type="molecule type" value="Genomic_DNA"/>
</dbReference>
<dbReference type="EMBL" id="AY495295">
    <property type="protein sequence ID" value="AAR95163.1"/>
    <property type="molecule type" value="Genomic_DNA"/>
</dbReference>
<dbReference type="EMBL" id="AY495297">
    <property type="protein sequence ID" value="AAR95189.1"/>
    <property type="molecule type" value="Genomic_DNA"/>
</dbReference>
<dbReference type="EMBL" id="AY495298">
    <property type="protein sequence ID" value="AAR95202.1"/>
    <property type="molecule type" value="Genomic_DNA"/>
</dbReference>
<dbReference type="EMBL" id="AY495299">
    <property type="protein sequence ID" value="AAR95215.1"/>
    <property type="molecule type" value="Genomic_DNA"/>
</dbReference>
<dbReference type="EMBL" id="AY495300">
    <property type="protein sequence ID" value="AAR95228.1"/>
    <property type="molecule type" value="Genomic_DNA"/>
</dbReference>
<dbReference type="EMBL" id="AY495301">
    <property type="protein sequence ID" value="AAR95241.1"/>
    <property type="molecule type" value="Genomic_DNA"/>
</dbReference>
<dbReference type="EMBL" id="AY495302">
    <property type="protein sequence ID" value="AAR95254.1"/>
    <property type="molecule type" value="Genomic_DNA"/>
</dbReference>
<dbReference type="EMBL" id="AY495303">
    <property type="protein sequence ID" value="AAR95267.1"/>
    <property type="molecule type" value="Genomic_DNA"/>
</dbReference>
<dbReference type="EMBL" id="AY495304">
    <property type="protein sequence ID" value="AAR95280.1"/>
    <property type="molecule type" value="Genomic_DNA"/>
</dbReference>
<dbReference type="EMBL" id="AY495305">
    <property type="protein sequence ID" value="AAR95293.1"/>
    <property type="molecule type" value="Genomic_DNA"/>
</dbReference>
<dbReference type="EMBL" id="AY495306">
    <property type="protein sequence ID" value="AAR95306.1"/>
    <property type="molecule type" value="Genomic_DNA"/>
</dbReference>
<dbReference type="EMBL" id="AY495307">
    <property type="protein sequence ID" value="AAR95319.1"/>
    <property type="molecule type" value="Genomic_DNA"/>
</dbReference>
<dbReference type="EMBL" id="AY495308">
    <property type="protein sequence ID" value="AAR95332.1"/>
    <property type="molecule type" value="Genomic_DNA"/>
</dbReference>
<dbReference type="EMBL" id="AY495309">
    <property type="protein sequence ID" value="AAR95345.1"/>
    <property type="molecule type" value="Genomic_DNA"/>
</dbReference>
<dbReference type="EMBL" id="AY495310">
    <property type="protein sequence ID" value="AAR95358.1"/>
    <property type="molecule type" value="Genomic_DNA"/>
</dbReference>
<dbReference type="EMBL" id="AY495311">
    <property type="protein sequence ID" value="AAR95371.1"/>
    <property type="molecule type" value="Genomic_DNA"/>
</dbReference>
<dbReference type="EMBL" id="AY495312">
    <property type="protein sequence ID" value="AAR95384.1"/>
    <property type="molecule type" value="Genomic_DNA"/>
</dbReference>
<dbReference type="EMBL" id="AY495313">
    <property type="protein sequence ID" value="AAR95397.1"/>
    <property type="molecule type" value="Genomic_DNA"/>
</dbReference>
<dbReference type="EMBL" id="AY495314">
    <property type="protein sequence ID" value="AAR95410.1"/>
    <property type="molecule type" value="Genomic_DNA"/>
</dbReference>
<dbReference type="EMBL" id="AY495315">
    <property type="protein sequence ID" value="AAR95423.1"/>
    <property type="molecule type" value="Genomic_DNA"/>
</dbReference>
<dbReference type="EMBL" id="AY495316">
    <property type="protein sequence ID" value="AAR95436.1"/>
    <property type="molecule type" value="Genomic_DNA"/>
</dbReference>
<dbReference type="EMBL" id="AY495317">
    <property type="protein sequence ID" value="AAR95449.1"/>
    <property type="molecule type" value="Genomic_DNA"/>
</dbReference>
<dbReference type="EMBL" id="AY495318">
    <property type="protein sequence ID" value="AAR95462.1"/>
    <property type="molecule type" value="Genomic_DNA"/>
</dbReference>
<dbReference type="EMBL" id="AY495319">
    <property type="protein sequence ID" value="AAR95475.1"/>
    <property type="molecule type" value="Genomic_DNA"/>
</dbReference>
<dbReference type="EMBL" id="AY495320">
    <property type="protein sequence ID" value="AAR95488.1"/>
    <property type="molecule type" value="Genomic_DNA"/>
</dbReference>
<dbReference type="EMBL" id="AY495322">
    <property type="protein sequence ID" value="AAR95514.1"/>
    <property type="molecule type" value="Genomic_DNA"/>
</dbReference>
<dbReference type="EMBL" id="AY495323">
    <property type="protein sequence ID" value="AAR95527.1"/>
    <property type="molecule type" value="Genomic_DNA"/>
</dbReference>
<dbReference type="EMBL" id="AY495324">
    <property type="protein sequence ID" value="AAR95540.1"/>
    <property type="molecule type" value="Genomic_DNA"/>
</dbReference>
<dbReference type="EMBL" id="AY495325">
    <property type="protein sequence ID" value="AAR95553.1"/>
    <property type="molecule type" value="Genomic_DNA"/>
</dbReference>
<dbReference type="EMBL" id="AY495326">
    <property type="protein sequence ID" value="AAR95566.1"/>
    <property type="molecule type" value="Genomic_DNA"/>
</dbReference>
<dbReference type="EMBL" id="AY495327">
    <property type="protein sequence ID" value="AAR95579.1"/>
    <property type="molecule type" value="Genomic_DNA"/>
</dbReference>
<dbReference type="EMBL" id="AY495328">
    <property type="protein sequence ID" value="AAR95592.1"/>
    <property type="molecule type" value="Genomic_DNA"/>
</dbReference>
<dbReference type="EMBL" id="AY495329">
    <property type="protein sequence ID" value="AAR95605.1"/>
    <property type="molecule type" value="Genomic_DNA"/>
</dbReference>
<dbReference type="EMBL" id="AY495330">
    <property type="protein sequence ID" value="AAR95618.1"/>
    <property type="molecule type" value="Genomic_DNA"/>
</dbReference>
<dbReference type="EMBL" id="M10546">
    <property type="protein sequence ID" value="AAA65503.1"/>
    <property type="molecule type" value="Genomic_DNA"/>
</dbReference>
<dbReference type="PIR" id="A00463">
    <property type="entry name" value="ODHU1"/>
</dbReference>
<dbReference type="RefSeq" id="YP_003024028.1">
    <property type="nucleotide sequence ID" value="NC_012920.1"/>
</dbReference>
<dbReference type="PDB" id="5Z62">
    <property type="method" value="EM"/>
    <property type="resolution" value="3.60 A"/>
    <property type="chains" value="A=1-513"/>
</dbReference>
<dbReference type="PDBsum" id="5Z62"/>
<dbReference type="SMR" id="P00395"/>
<dbReference type="BioGRID" id="110615">
    <property type="interactions" value="64"/>
</dbReference>
<dbReference type="ComplexPortal" id="CPX-6123">
    <property type="entry name" value="Mitochondrial respiratory chain complex IV"/>
</dbReference>
<dbReference type="CORUM" id="P00395"/>
<dbReference type="FunCoup" id="P00395">
    <property type="interactions" value="219"/>
</dbReference>
<dbReference type="IntAct" id="P00395">
    <property type="interactions" value="65"/>
</dbReference>
<dbReference type="MINT" id="P00395"/>
<dbReference type="STRING" id="9606.ENSP00000354499"/>
<dbReference type="BindingDB" id="P00395"/>
<dbReference type="ChEMBL" id="CHEMBL6173"/>
<dbReference type="DrugBank" id="DB02659">
    <property type="generic name" value="Cholic Acid"/>
</dbReference>
<dbReference type="DrugBank" id="DB09130">
    <property type="generic name" value="Copper"/>
</dbReference>
<dbReference type="DrugBank" id="DB06778">
    <property type="generic name" value="Cupric sulfate"/>
</dbReference>
<dbReference type="DrugBank" id="DB04464">
    <property type="generic name" value="N-Formylmethionine"/>
</dbReference>
<dbReference type="DrugBank" id="DB09140">
    <property type="generic name" value="Oxygen"/>
</dbReference>
<dbReference type="TCDB" id="3.D.4.11.1">
    <property type="family name" value="the proton-translocating cytochrome oxidase (cox) superfamily"/>
</dbReference>
<dbReference type="GlyCosmos" id="P00395">
    <property type="glycosylation" value="1 site, 1 glycan"/>
</dbReference>
<dbReference type="GlyGen" id="P00395">
    <property type="glycosylation" value="2 sites, 1 O-linked glycan (1 site)"/>
</dbReference>
<dbReference type="iPTMnet" id="P00395"/>
<dbReference type="PhosphoSitePlus" id="P00395"/>
<dbReference type="SwissPalm" id="P00395"/>
<dbReference type="BioMuta" id="MT-CO1"/>
<dbReference type="DMDM" id="116977"/>
<dbReference type="jPOST" id="P00395"/>
<dbReference type="MassIVE" id="P00395"/>
<dbReference type="PaxDb" id="9606-ENSP00000354499"/>
<dbReference type="PeptideAtlas" id="P00395"/>
<dbReference type="ProteomicsDB" id="51246"/>
<dbReference type="Pumba" id="P00395"/>
<dbReference type="TopDownProteomics" id="P00395"/>
<dbReference type="Antibodypedia" id="4261">
    <property type="antibodies" value="209 antibodies from 32 providers"/>
</dbReference>
<dbReference type="DNASU" id="4512"/>
<dbReference type="Ensembl" id="ENST00000361624.2">
    <property type="protein sequence ID" value="ENSP00000354499.2"/>
    <property type="gene ID" value="ENSG00000198804.2"/>
</dbReference>
<dbReference type="GeneID" id="4512"/>
<dbReference type="KEGG" id="hsa:4512"/>
<dbReference type="AGR" id="HGNC:7419"/>
<dbReference type="CTD" id="4512"/>
<dbReference type="DisGeNET" id="4512"/>
<dbReference type="GeneCards" id="MT-CO1"/>
<dbReference type="GeneReviews" id="MT-CO1"/>
<dbReference type="HGNC" id="HGNC:7419">
    <property type="gene designation" value="MT-CO1"/>
</dbReference>
<dbReference type="HPA" id="ENSG00000198804">
    <property type="expression patterns" value="Tissue enhanced (heart muscle, tongue)"/>
</dbReference>
<dbReference type="MalaCards" id="MT-CO1"/>
<dbReference type="MIM" id="114500">
    <property type="type" value="phenotype"/>
</dbReference>
<dbReference type="MIM" id="220110">
    <property type="type" value="phenotype"/>
</dbReference>
<dbReference type="MIM" id="500008">
    <property type="type" value="phenotype"/>
</dbReference>
<dbReference type="MIM" id="516030">
    <property type="type" value="gene"/>
</dbReference>
<dbReference type="MIM" id="535000">
    <property type="type" value="phenotype"/>
</dbReference>
<dbReference type="MIM" id="550500">
    <property type="type" value="phenotype"/>
</dbReference>
<dbReference type="neXtProt" id="NX_P00395"/>
<dbReference type="OpenTargets" id="ENSG00000198804"/>
<dbReference type="Orphanet" id="99845">
    <property type="disease" value="Genetic recurrent myoglobinuria"/>
</dbReference>
<dbReference type="Orphanet" id="254905">
    <property type="disease" value="Isolated cytochrome C oxidase deficiency"/>
</dbReference>
<dbReference type="Orphanet" id="104">
    <property type="disease" value="Leber hereditary optic neuropathy"/>
</dbReference>
<dbReference type="Orphanet" id="550">
    <property type="disease" value="MELAS"/>
</dbReference>
<dbReference type="Orphanet" id="90641">
    <property type="disease" value="Rare mitochondrial non-syndromic sensorineural deafness"/>
</dbReference>
<dbReference type="PharmGKB" id="PA31225"/>
<dbReference type="VEuPathDB" id="HostDB:ENSG00000198804"/>
<dbReference type="eggNOG" id="KOG4769">
    <property type="taxonomic scope" value="Eukaryota"/>
</dbReference>
<dbReference type="GeneTree" id="ENSGT00390000001518"/>
<dbReference type="HOGENOM" id="CLU_011899_7_3_1"/>
<dbReference type="InParanoid" id="P00395"/>
<dbReference type="OMA" id="WAMMSIG"/>
<dbReference type="PAN-GO" id="P00395">
    <property type="GO annotations" value="4 GO annotations based on evolutionary models"/>
</dbReference>
<dbReference type="PhylomeDB" id="P00395"/>
<dbReference type="TreeFam" id="TF353096"/>
<dbReference type="BioCyc" id="MetaCyc:HS00026-MONOMER"/>
<dbReference type="BRENDA" id="7.1.1.9">
    <property type="organism ID" value="2681"/>
</dbReference>
<dbReference type="PathwayCommons" id="P00395"/>
<dbReference type="Reactome" id="R-HSA-5628897">
    <property type="pathway name" value="TP53 Regulates Metabolic Genes"/>
</dbReference>
<dbReference type="Reactome" id="R-HSA-611105">
    <property type="pathway name" value="Respiratory electron transport"/>
</dbReference>
<dbReference type="Reactome" id="R-HSA-9707564">
    <property type="pathway name" value="Cytoprotection by HMOX1"/>
</dbReference>
<dbReference type="Reactome" id="R-HSA-9837999">
    <property type="pathway name" value="Mitochondrial protein degradation"/>
</dbReference>
<dbReference type="Reactome" id="R-HSA-9864848">
    <property type="pathway name" value="Complex IV assembly"/>
</dbReference>
<dbReference type="SignaLink" id="P00395"/>
<dbReference type="SIGNOR" id="P00395"/>
<dbReference type="UniPathway" id="UPA00705"/>
<dbReference type="BioGRID-ORCS" id="4512">
    <property type="hits" value="0 hits in 3 CRISPR screens"/>
</dbReference>
<dbReference type="ChiTaRS" id="MT-CO1">
    <property type="organism name" value="human"/>
</dbReference>
<dbReference type="GeneWiki" id="MT-CO1"/>
<dbReference type="GenomeRNAi" id="4512"/>
<dbReference type="Pharos" id="P00395">
    <property type="development level" value="Tchem"/>
</dbReference>
<dbReference type="PRO" id="PR:P00395"/>
<dbReference type="Proteomes" id="UP000005640">
    <property type="component" value="Mitochondrion MT"/>
</dbReference>
<dbReference type="RNAct" id="P00395">
    <property type="molecule type" value="protein"/>
</dbReference>
<dbReference type="Bgee" id="ENSG00000198804">
    <property type="expression patterns" value="Expressed in right uterine tube and 95 other cell types or tissues"/>
</dbReference>
<dbReference type="ExpressionAtlas" id="P00395">
    <property type="expression patterns" value="baseline and differential"/>
</dbReference>
<dbReference type="GO" id="GO:0005743">
    <property type="term" value="C:mitochondrial inner membrane"/>
    <property type="evidence" value="ECO:0000304"/>
    <property type="project" value="Reactome"/>
</dbReference>
<dbReference type="GO" id="GO:0031966">
    <property type="term" value="C:mitochondrial membrane"/>
    <property type="evidence" value="ECO:0000314"/>
    <property type="project" value="ComplexPortal"/>
</dbReference>
<dbReference type="GO" id="GO:0005739">
    <property type="term" value="C:mitochondrion"/>
    <property type="evidence" value="ECO:0006056"/>
    <property type="project" value="FlyBase"/>
</dbReference>
<dbReference type="GO" id="GO:0045277">
    <property type="term" value="C:respiratory chain complex IV"/>
    <property type="evidence" value="ECO:0000314"/>
    <property type="project" value="UniProtKB"/>
</dbReference>
<dbReference type="GO" id="GO:0004129">
    <property type="term" value="F:cytochrome-c oxidase activity"/>
    <property type="evidence" value="ECO:0007669"/>
    <property type="project" value="UniProtKB-EC"/>
</dbReference>
<dbReference type="GO" id="GO:0020037">
    <property type="term" value="F:heme binding"/>
    <property type="evidence" value="ECO:0007669"/>
    <property type="project" value="InterPro"/>
</dbReference>
<dbReference type="GO" id="GO:0046872">
    <property type="term" value="F:metal ion binding"/>
    <property type="evidence" value="ECO:0007669"/>
    <property type="project" value="UniProtKB-KW"/>
</dbReference>
<dbReference type="GO" id="GO:0009060">
    <property type="term" value="P:aerobic respiration"/>
    <property type="evidence" value="ECO:0000318"/>
    <property type="project" value="GO_Central"/>
</dbReference>
<dbReference type="GO" id="GO:0045333">
    <property type="term" value="P:cellular respiration"/>
    <property type="evidence" value="ECO:0000303"/>
    <property type="project" value="ComplexPortal"/>
</dbReference>
<dbReference type="GO" id="GO:0021549">
    <property type="term" value="P:cerebellum development"/>
    <property type="evidence" value="ECO:0007669"/>
    <property type="project" value="Ensembl"/>
</dbReference>
<dbReference type="GO" id="GO:0006123">
    <property type="term" value="P:mitochondrial electron transport, cytochrome c to oxygen"/>
    <property type="evidence" value="ECO:0000303"/>
    <property type="project" value="ComplexPortal"/>
</dbReference>
<dbReference type="GO" id="GO:0022904">
    <property type="term" value="P:respiratory electron transport chain"/>
    <property type="evidence" value="ECO:0000318"/>
    <property type="project" value="GO_Central"/>
</dbReference>
<dbReference type="GO" id="GO:0046688">
    <property type="term" value="P:response to copper ion"/>
    <property type="evidence" value="ECO:0007669"/>
    <property type="project" value="Ensembl"/>
</dbReference>
<dbReference type="GO" id="GO:0051602">
    <property type="term" value="P:response to electrical stimulus"/>
    <property type="evidence" value="ECO:0007669"/>
    <property type="project" value="Ensembl"/>
</dbReference>
<dbReference type="GO" id="GO:0001666">
    <property type="term" value="P:response to hypoxia"/>
    <property type="evidence" value="ECO:0007669"/>
    <property type="project" value="Ensembl"/>
</dbReference>
<dbReference type="GO" id="GO:0006979">
    <property type="term" value="P:response to oxidative stress"/>
    <property type="evidence" value="ECO:0007669"/>
    <property type="project" value="Ensembl"/>
</dbReference>
<dbReference type="CDD" id="cd01663">
    <property type="entry name" value="Cyt_c_Oxidase_I"/>
    <property type="match status" value="1"/>
</dbReference>
<dbReference type="FunFam" id="1.20.210.10:FF:000001">
    <property type="entry name" value="Cytochrome c oxidase subunit 1"/>
    <property type="match status" value="1"/>
</dbReference>
<dbReference type="Gene3D" id="1.20.210.10">
    <property type="entry name" value="Cytochrome c oxidase-like, subunit I domain"/>
    <property type="match status" value="1"/>
</dbReference>
<dbReference type="InterPro" id="IPR023616">
    <property type="entry name" value="Cyt_c_oxase-like_su1_dom"/>
</dbReference>
<dbReference type="InterPro" id="IPR036927">
    <property type="entry name" value="Cyt_c_oxase-like_su1_sf"/>
</dbReference>
<dbReference type="InterPro" id="IPR000883">
    <property type="entry name" value="Cyt_C_Oxase_1"/>
</dbReference>
<dbReference type="InterPro" id="IPR023615">
    <property type="entry name" value="Cyt_c_Oxase_su1_BS"/>
</dbReference>
<dbReference type="InterPro" id="IPR033944">
    <property type="entry name" value="Cyt_c_oxase_su1_dom"/>
</dbReference>
<dbReference type="PANTHER" id="PTHR10422">
    <property type="entry name" value="CYTOCHROME C OXIDASE SUBUNIT 1"/>
    <property type="match status" value="1"/>
</dbReference>
<dbReference type="PANTHER" id="PTHR10422:SF18">
    <property type="entry name" value="CYTOCHROME C OXIDASE SUBUNIT 1"/>
    <property type="match status" value="1"/>
</dbReference>
<dbReference type="Pfam" id="PF00115">
    <property type="entry name" value="COX1"/>
    <property type="match status" value="1"/>
</dbReference>
<dbReference type="PRINTS" id="PR01165">
    <property type="entry name" value="CYCOXIDASEI"/>
</dbReference>
<dbReference type="SUPFAM" id="SSF81442">
    <property type="entry name" value="Cytochrome c oxidase subunit I-like"/>
    <property type="match status" value="1"/>
</dbReference>
<dbReference type="PROSITE" id="PS50855">
    <property type="entry name" value="COX1"/>
    <property type="match status" value="1"/>
</dbReference>
<dbReference type="PROSITE" id="PS00077">
    <property type="entry name" value="COX1_CUB"/>
    <property type="match status" value="1"/>
</dbReference>
<organism>
    <name type="scientific">Homo sapiens</name>
    <name type="common">Human</name>
    <dbReference type="NCBI Taxonomy" id="9606"/>
    <lineage>
        <taxon>Eukaryota</taxon>
        <taxon>Metazoa</taxon>
        <taxon>Chordata</taxon>
        <taxon>Craniata</taxon>
        <taxon>Vertebrata</taxon>
        <taxon>Euteleostomi</taxon>
        <taxon>Mammalia</taxon>
        <taxon>Eutheria</taxon>
        <taxon>Euarchontoglires</taxon>
        <taxon>Primates</taxon>
        <taxon>Haplorrhini</taxon>
        <taxon>Catarrhini</taxon>
        <taxon>Hominidae</taxon>
        <taxon>Homo</taxon>
    </lineage>
</organism>
<gene>
    <name type="primary">MT-CO1</name>
    <name type="synonym">COI</name>
    <name type="synonym">COXI</name>
    <name type="synonym">MTCO1</name>
</gene>
<keyword id="KW-0002">3D-structure</keyword>
<keyword id="KW-0106">Calcium</keyword>
<keyword id="KW-0186">Copper</keyword>
<keyword id="KW-0209">Deafness</keyword>
<keyword id="KW-0225">Disease variant</keyword>
<keyword id="KW-0249">Electron transport</keyword>
<keyword id="KW-0349">Heme</keyword>
<keyword id="KW-0408">Iron</keyword>
<keyword id="KW-0429">Leber hereditary optic neuropathy</keyword>
<keyword id="KW-0460">Magnesium</keyword>
<keyword id="KW-0472">Membrane</keyword>
<keyword id="KW-0479">Metal-binding</keyword>
<keyword id="KW-0496">Mitochondrion</keyword>
<keyword id="KW-0999">Mitochondrion inner membrane</keyword>
<keyword id="KW-1010">Non-syndromic deafness</keyword>
<keyword id="KW-1274">Primary mitochondrial disease</keyword>
<keyword id="KW-1267">Proteomics identification</keyword>
<keyword id="KW-1185">Reference proteome</keyword>
<keyword id="KW-0679">Respiratory chain</keyword>
<keyword id="KW-0915">Sodium</keyword>
<keyword id="KW-1278">Translocase</keyword>
<keyword id="KW-0812">Transmembrane</keyword>
<keyword id="KW-1133">Transmembrane helix</keyword>
<keyword id="KW-0813">Transport</keyword>
<evidence type="ECO:0000250" key="1">
    <source>
        <dbReference type="UniProtKB" id="P00396"/>
    </source>
</evidence>
<evidence type="ECO:0000250" key="2">
    <source>
        <dbReference type="UniProtKB" id="P00401"/>
    </source>
</evidence>
<evidence type="ECO:0000269" key="3">
    <source>
    </source>
</evidence>
<evidence type="ECO:0000269" key="4">
    <source>
    </source>
</evidence>
<evidence type="ECO:0000269" key="5">
    <source>
    </source>
</evidence>
<evidence type="ECO:0000269" key="6">
    <source>
    </source>
</evidence>
<evidence type="ECO:0000269" key="7">
    <source>
    </source>
</evidence>
<evidence type="ECO:0000269" key="8">
    <source>
    </source>
</evidence>
<evidence type="ECO:0000269" key="9">
    <source>
    </source>
</evidence>
<evidence type="ECO:0000269" key="10">
    <source>
    </source>
</evidence>
<evidence type="ECO:0000269" key="11">
    <source>
    </source>
</evidence>
<evidence type="ECO:0000269" key="12">
    <source>
    </source>
</evidence>
<evidence type="ECO:0000269" key="13">
    <source>
    </source>
</evidence>
<evidence type="ECO:0000269" key="14">
    <source>
    </source>
</evidence>
<evidence type="ECO:0000269" key="15">
    <source>
    </source>
</evidence>
<evidence type="ECO:0000269" key="16">
    <source>
    </source>
</evidence>
<evidence type="ECO:0000269" key="17">
    <source>
    </source>
</evidence>
<evidence type="ECO:0000305" key="18"/>
<geneLocation type="mitochondrion"/>
<sequence length="513" mass="57041">MFADRWLFSTNHKDIGTLYLLFGAWAGVLGTALSLLIRAELGQPGNLLGNDHIYNVIVTAHAFVMIFFMVMPIMIGGFGNWLVPLMIGAPDMAFPRMNNMSFWLLPPSLLLLLASAMVEAGAGTGWTVYPPLAGNYSHPGASVDLTIFSLHLAGVSSILGAINFITTIINMKPPAMTQYQTPLFVWSVLITAVLLLLSLPVLAAGITMLLTDRNLNTTFFDPAGGGDPILYQHLFWFFGHPEVYILILPGFGMISHIVTYYSGKKEPFGYMGMVWAMMSIGFLGFIVWAHHMFTVGMDVDTRAYFTSATMIIAIPTGVKVFSWLATLHGSNMKWSAAVLWALGFIFLFTVGGLTGIVLANSSLDIVLHDTYYVVAHFHYVLSMGAVFAIMGGFIHWFPLFSGYTLDQTYAKIHFTIMFIGVNLTFFPQHFLGLSGMPRRYSDYPDAYTTWNILSSVGSFISLTAVMLMIFMIWEAFASKRKVLMVEEPSMNLEWLYGCPPPYHTFEEPVYMKS</sequence>
<comment type="function">
    <text evidence="2">Component of the cytochrome c oxidase, the last enzyme in the mitochondrial electron transport chain which drives oxidative phosphorylation. The respiratory chain contains 3 multisubunit complexes succinate dehydrogenase (complex II, CII), ubiquinol-cytochrome c oxidoreductase (cytochrome b-c1 complex, complex III, CIII) and cytochrome c oxidase (complex IV, CIV), that cooperate to transfer electrons derived from NADH and succinate to molecular oxygen, creating an electrochemical gradient over the inner membrane that drives transmembrane transport and the ATP synthase. Cytochrome c oxidase is the component of the respiratory chain that catalyzes the reduction of oxygen to water. Electrons originating from reduced cytochrome c in the intermembrane space (IMS) are transferred via the dinuclear copper A center (CU(A)) of subunit 2 and heme A of subunit 1 to the active site in subunit 1, a binuclear center (BNC) formed by heme A3 and copper B (CU(B)). The BNC reduces molecular oxygen to 2 water molecules using 4 electrons from cytochrome c in the IMS and 4 protons from the mitochondrial matrix.</text>
</comment>
<comment type="catalytic activity">
    <reaction evidence="2">
        <text>4 Fe(II)-[cytochrome c] + O2 + 8 H(+)(in) = 4 Fe(III)-[cytochrome c] + 2 H2O + 4 H(+)(out)</text>
        <dbReference type="Rhea" id="RHEA:11436"/>
        <dbReference type="Rhea" id="RHEA-COMP:10350"/>
        <dbReference type="Rhea" id="RHEA-COMP:14399"/>
        <dbReference type="ChEBI" id="CHEBI:15377"/>
        <dbReference type="ChEBI" id="CHEBI:15378"/>
        <dbReference type="ChEBI" id="CHEBI:15379"/>
        <dbReference type="ChEBI" id="CHEBI:29033"/>
        <dbReference type="ChEBI" id="CHEBI:29034"/>
        <dbReference type="EC" id="7.1.1.9"/>
    </reaction>
    <physiologicalReaction direction="left-to-right" evidence="2">
        <dbReference type="Rhea" id="RHEA:11437"/>
    </physiologicalReaction>
</comment>
<comment type="cofactor">
    <cofactor evidence="14">
        <name>heme</name>
        <dbReference type="ChEBI" id="CHEBI:30413"/>
    </cofactor>
    <text evidence="14">Binds 2 heme A groups non-covalently per subunit.</text>
</comment>
<comment type="cofactor">
    <cofactor evidence="14">
        <name>Cu cation</name>
        <dbReference type="ChEBI" id="CHEBI:23378"/>
    </cofactor>
    <text evidence="14">Binds a copper B center.</text>
</comment>
<comment type="pathway">
    <text evidence="2">Energy metabolism; oxidative phosphorylation.</text>
</comment>
<comment type="subunit">
    <text evidence="11 12 13 14">Component of the cytochrome c oxidase (complex IV, CIV), a multisubunit enzyme composed of 14 subunits. The complex is composed of a catalytic core of 3 subunits MT-CO1, MT-CO2 and MT-CO3, encoded in the mitochondrial DNA, and 11 supernumerary subunits COX4I1 (or COX4I2), COX5A, COX5B, COX6A1 (or COX6A2), COX6B1 (or COX6B2), COX6C, COX7A2 (or COX7A1), COX7B, COX7C, COX8A and NDUFA4, which are encoded in the nuclear genome (PubMed:30030519). The complex exists as a monomer or a dimer and forms supercomplexes (SCs) in the inner mitochondrial membrane with NADH-ubiquinone oxidoreductase (complex I, CI) and ubiquinol-cytochrome c oxidoreductase (cytochrome b-c1 complex, complex III, CIII), resulting in different assemblies (supercomplex SCI(1)III(2)IV(1) and megacomplex MCI(2)III(2)IV(2)) (PubMed:28844695). As a newly synthesized protein, rapidly incorporates into a multi-subunit assembly intermediate in the inner membrane, called MITRAC (mitochondrial translation regulation assembly intermediate of cytochrome c oxidase) complex, whose core components are COA3/MITRAC12 and COX14. Within the MITRAC complex, interacts with COA3 and with SMIM20/MITRAC7; the interaction with SMIM20 stabilizes the newly synthesized MT-CO1 and prevents its premature turnover (PubMed:26321642). Interacts with TMEM177 in a COX20-dependent manner (PubMed:29154948).</text>
</comment>
<comment type="interaction">
    <interactant intactId="EBI-2117234">
        <id>P00395</id>
    </interactant>
    <interactant intactId="EBI-6570446">
        <id>Q9Y2R0</id>
        <label>COA3</label>
    </interactant>
    <organismsDiffer>false</organismsDiffer>
    <experiments>11</experiments>
</comment>
<comment type="interaction">
    <interactant intactId="EBI-2117234">
        <id>P00395</id>
    </interactant>
    <interactant intactId="EBI-1056574">
        <id>P13073</id>
        <label>COX4I1</label>
    </interactant>
    <organismsDiffer>false</organismsDiffer>
    <experiments>3</experiments>
</comment>
<comment type="interaction">
    <interactant intactId="EBI-2117234">
        <id>P00395</id>
    </interactant>
    <interactant intactId="EBI-6570759">
        <id>Q9BVV7</id>
        <label>TIMM21</label>
    </interactant>
    <organismsDiffer>false</organismsDiffer>
    <experiments>3</experiments>
</comment>
<comment type="subcellular location">
    <subcellularLocation>
        <location evidence="14">Mitochondrion inner membrane</location>
        <topology evidence="14">Multi-pass membrane protein</topology>
    </subcellularLocation>
</comment>
<comment type="disease" evidence="6">
    <disease id="DI-00640">
        <name>Leber hereditary optic neuropathy</name>
        <acronym>LHON</acronym>
        <description>A maternally inherited form of Leber hereditary optic neuropathy, a mitochondrial disease resulting in bilateral painless loss of central vision due to selective degeneration of the retinal ganglion cells and their axons. The disorder shows incomplete penetrance and male predominance. Cardiac conduction defects and neurological defects have also been described in some LHON patients. LHON results from primary mitochondrial DNA mutations affecting the respiratory chain complexes.</description>
        <dbReference type="MIM" id="535000"/>
    </disease>
    <text>The disease is caused by variants affecting the gene represented in this entry.</text>
</comment>
<comment type="disease">
    <text evidence="16 17">MT-CO1 may play a role in the pathogenesis of acquired idiopathic sideroblastic anemia, a disease characterized by inadequate formation of heme and excessive accumulation of iron in mitochondria. Mitochondrial iron overload may be attributable to mutations of mitochondrial DNA because these can cause respiratory chain dysfunction, thereby impairing reduction of ferric iron to ferrous iron. The reduced form of iron is essential to the last step of mitochondrial heme biosynthesis.</text>
</comment>
<comment type="disease" evidence="5 7">
    <disease id="DI-01469">
        <name>Mitochondrial complex IV deficiency</name>
        <acronym>MT-C4D</acronym>
        <description>A disorder of the mitochondrial respiratory chain with heterogeneous clinical manifestations, ranging from isolated myopathy to severe multisystem disease affecting several tissues and organs. Features include hypertrophic cardiomyopathy, hepatomegaly and liver dysfunction, hypotonia, muscle weakness, exercise intolerance, developmental delay, delayed motor development and intellectual disability. Some affected individuals manifest a fatal hypertrophic cardiomyopathy resulting in neonatal death. A subset of patients manifest Leigh syndrome.</description>
        <dbReference type="MIM" id="220110"/>
    </disease>
    <text>The disease is caused by variants affecting the gene represented in this entry.</text>
</comment>
<comment type="disease" evidence="4">
    <disease id="DI-02775">
        <name>Recurrent myoglobinuria mitochondrial</name>
        <acronym>RM-MT</acronym>
        <description>Recurrent myoglobinuria is characterized by recurrent attacks of rhabdomyolysis (necrosis or disintegration of skeletal muscle) associated with muscle pain and weakness, and followed by excretion of myoglobin in the urine.</description>
        <dbReference type="MIM" id="550500"/>
    </disease>
    <text>The gene represented in this entry may be involved in disease pathogenesis.</text>
</comment>
<comment type="disease" evidence="3">
    <disease id="DI-02887">
        <name>Deafness, sensorineural, mitochondrial</name>
        <acronym>DFNM</acronym>
        <description>A form of non-syndromic deafness with maternal inheritance. Affected individuals manifest progressive, postlingual, sensorineural hearing loss involving high frequencies.</description>
        <dbReference type="MIM" id="500008"/>
    </disease>
    <text>The disease is caused by variants affecting the gene represented in this entry.</text>
</comment>
<comment type="disease" evidence="8 10">
    <disease id="DI-01359">
        <name>Colorectal cancer</name>
        <acronym>CRC</acronym>
        <description>A complex disease characterized by malignant lesions arising from the inner wall of the large intestine (the colon) and the rectum. Genetic alterations are often associated with progression from premalignant lesion (adenoma) to invasive adenocarcinoma. Risk factors for cancer of the colon and rectum include colon polyps, long-standing ulcerative colitis, and genetic family history.</description>
        <dbReference type="MIM" id="114500"/>
    </disease>
    <text>The gene represented in this entry may be involved in disease pathogenesis.</text>
</comment>
<comment type="similarity">
    <text evidence="18">Belongs to the heme-copper respiratory oxidase family.</text>
</comment>
<accession>P00395</accession>
<accession>Q34770</accession>
<proteinExistence type="evidence at protein level"/>
<name>COX1_HUMAN</name>